<protein>
    <recommendedName>
        <fullName evidence="33">RNA-binding protein FXR1</fullName>
    </recommendedName>
    <alternativeName>
        <fullName evidence="33">FMR1 autosomal homolog 1</fullName>
    </alternativeName>
    <alternativeName>
        <fullName>hFXR1p</fullName>
    </alternativeName>
</protein>
<name>FXR1_HUMAN</name>
<keyword id="KW-0002">3D-structure</keyword>
<keyword id="KW-0007">Acetylation</keyword>
<keyword id="KW-0025">Alternative splicing</keyword>
<keyword id="KW-0966">Cell projection</keyword>
<keyword id="KW-0963">Cytoplasm</keyword>
<keyword id="KW-0217">Developmental protein</keyword>
<keyword id="KW-0221">Differentiation</keyword>
<keyword id="KW-0903">Direct protein sequencing</keyword>
<keyword id="KW-1017">Isopeptide bond</keyword>
<keyword id="KW-0488">Methylation</keyword>
<keyword id="KW-0517">Myogenesis</keyword>
<keyword id="KW-0539">Nucleus</keyword>
<keyword id="KW-0597">Phosphoprotein</keyword>
<keyword id="KW-1267">Proteomics identification</keyword>
<keyword id="KW-1185">Reference proteome</keyword>
<keyword id="KW-0677">Repeat</keyword>
<keyword id="KW-0694">RNA-binding</keyword>
<keyword id="KW-0744">Spermatogenesis</keyword>
<keyword id="KW-0770">Synapse</keyword>
<keyword id="KW-0832">Ubl conjugation</keyword>
<comment type="function">
    <text evidence="4 10 12 15 18 19 20 21 22 23 24">mRNA-binding protein that acts as a regulator of mRNAs translation and/or stability, and which is required for various processes, such as neurogenesis, muscle development and spermatogenesis (PubMed:17382880, PubMed:20417602, PubMed:30067974, PubMed:34731628, PubMed:35989368, PubMed:36306353). Specifically binds to AU-rich elements (AREs) in the 3'-UTR of target mRNAs (PubMed:17382880, PubMed:34731628). Promotes formation of some phase-separated membraneless compartment by undergoing liquid-liquid phase separation upon binding to AREs-containing mRNAs, leading to assemble mRNAs into cytoplasmic ribonucleoprotein granules that concentrate mRNAs with associated regulatory factors (By similarity). Required to activate translation of stored mRNAs during late spermatogenesis: acts by undergoing liquid-liquid phase separation to assemble target mRNAs into cytoplasmic ribonucleoprotein granules that recruit translation initiation factor EIF4G3 to activate translation of stored mRNAs in late spermatids (By similarity). Promotes translation of MYC transcripts by recruiting the eIF4F complex to the translation start site (PubMed:34731628). Acts as a negative regulator of inflammation in response to IL19 by promoting destabilization of pro-inflammatory transcripts (PubMed:30067974). Also acts as an inhibitor of inflammation by binding to TNF mRNA, decreasing TNF protein production (By similarity). Acts as a negative regulator of AMPA receptor GRIA2/GluA2 synthesis during long-lasting synaptic potentiation of hippocampal neurons by binding to GRIA2/GluA2 mRNA, thereby inhibiting its translation (By similarity). Regulates proliferation of adult neural stem cells by binding to CDKN1A mRNA and promoting its expression (By similarity). Acts as a regulator of sleep and synaptic homeostasis by regulating translation of transcripts in neurons (By similarity). Required for embryonic and postnatal development of muscle tissue by undergoing liquid-liquid phase separation to assemble target mRNAs into cytoplasmic ribonucleoprotein granules (PubMed:30770808). Involved in the nuclear pore complex localization to the nuclear envelope by preventing cytoplasmic aggregation of nucleoporins: acts by preventing ectopic phase separation of nucleoporins in the cytoplasm via a microtubule-dependent mechanism (PubMed:32706158). Plays a role in the stabilization of PKP2 mRNA and therefore protein abundance, via its interaction with PKP3 (PubMed:25225333). May also do the same for PKP2, PKP3 and DSP via its interaction with PKP1 (PubMed:25225333). Forms a cytoplasmic messenger ribonucleoprotein (mRNP) network by packaging long mRNAs, serving as a scaffold that recruits proteins and signaling molecules. This network facilitates signaling reactions by maintaining proximity between kinases and substrates, crucial for processes like actomyosin reorganization (PubMed:39106863).</text>
</comment>
<comment type="subunit">
    <text evidence="4 8 11 14 15 18 22 24 25 27">Homodimer (via CC domains); homodiremization is required for FXR1-network nucleation (PubMed:39106863). Interacts with FMR1 (PubMed:11157796, PubMed:7489725, PubMed:8668200). Interacts with FRX2 (PubMed:7489725). Interacts with TDRD3 (PubMed:18664458). Interacts with HABP4 (PubMed:21771594). Interacts with CYFIP2 but not with CYFIP1 (By similarity). Interacts with EIF4G3; promoting translation of target mRNAs (By similarity). Interacts with ELAVL1 (PubMed:30067974). Interacts with CEP63; inhibiting 'Lys-63'-linked ubiquitination (PubMed:35989368). Interacts with PKP3; the interaction facilitates the binding of PKP3 to PKP2 mRNA (PubMed:25225333). Interacts with PKP1; the interaction may facilitate the binding of PKP1 to PKP2, PKP3 and DSP mRNA (PubMed:25225333).</text>
</comment>
<comment type="subunit">
    <text evidence="16">(Microbial infection) Interacts with Sindbis virus non-structural protein 3 (via C-terminus); this interaction inhibits the formation of host stress granules on viral mRNAs and the nsp3-FXR1 complexes bind viral RNAs and probably orchestrate the assembly of viral replication complexes.</text>
</comment>
<comment type="interaction">
    <interactant intactId="EBI-713291">
        <id>P51114</id>
    </interactant>
    <interactant intactId="EBI-2838246">
        <id>Q6AI12</id>
        <label>ANKRD40</label>
    </interactant>
    <organismsDiffer>false</organismsDiffer>
    <experiments>2</experiments>
</comment>
<comment type="interaction">
    <interactant intactId="EBI-713291">
        <id>P51114</id>
    </interactant>
    <interactant intactId="EBI-297683">
        <id>Q96CW1</id>
        <label>AP2M1</label>
    </interactant>
    <organismsDiffer>false</organismsDiffer>
    <experiments>2</experiments>
</comment>
<comment type="interaction">
    <interactant intactId="EBI-713291">
        <id>P51114</id>
    </interactant>
    <interactant intactId="EBI-1038838">
        <id>Q13936</id>
        <label>CACNA1C</label>
    </interactant>
    <organismsDiffer>false</organismsDiffer>
    <experiments>2</experiments>
</comment>
<comment type="interaction">
    <interactant intactId="EBI-713291">
        <id>P51114</id>
    </interactant>
    <interactant intactId="EBI-1387386">
        <id>Q9Y232</id>
        <label>CDYL</label>
    </interactant>
    <organismsDiffer>false</organismsDiffer>
    <experiments>2</experiments>
</comment>
<comment type="interaction">
    <interactant intactId="EBI-713291">
        <id>P51114</id>
    </interactant>
    <interactant intactId="EBI-739498">
        <id>Q9P209</id>
        <label>CEP72</label>
    </interactant>
    <organismsDiffer>false</organismsDiffer>
    <experiments>2</experiments>
</comment>
<comment type="interaction">
    <interactant intactId="EBI-713291">
        <id>P51114</id>
    </interactant>
    <interactant intactId="EBI-751327">
        <id>O00423</id>
        <label>EML1</label>
    </interactant>
    <organismsDiffer>false</organismsDiffer>
    <experiments>2</experiments>
</comment>
<comment type="interaction">
    <interactant intactId="EBI-713291">
        <id>P51114</id>
    </interactant>
    <interactant intactId="EBI-350432">
        <id>P21333</id>
        <label>FLNA</label>
    </interactant>
    <organismsDiffer>false</organismsDiffer>
    <experiments>2</experiments>
</comment>
<comment type="interaction">
    <interactant intactId="EBI-713291">
        <id>P51114</id>
    </interactant>
    <interactant intactId="EBI-366305">
        <id>Q06787</id>
        <label>FMR1</label>
    </interactant>
    <organismsDiffer>false</organismsDiffer>
    <experiments>6</experiments>
</comment>
<comment type="interaction">
    <interactant intactId="EBI-713291">
        <id>P51114</id>
    </interactant>
    <interactant intactId="EBI-740459">
        <id>P51116</id>
        <label>FXR2</label>
    </interactant>
    <organismsDiffer>false</organismsDiffer>
    <experiments>6</experiments>
</comment>
<comment type="interaction">
    <interactant intactId="EBI-713291">
        <id>P51114</id>
    </interactant>
    <interactant intactId="EBI-949239">
        <id>Q674X7</id>
        <label>KAZN</label>
    </interactant>
    <organismsDiffer>false</organismsDiffer>
    <experiments>2</experiments>
</comment>
<comment type="interaction">
    <interactant intactId="EBI-713291">
        <id>P51114</id>
    </interactant>
    <interactant intactId="EBI-742916">
        <id>Q8WZ19</id>
        <label>KCTD13</label>
    </interactant>
    <organismsDiffer>false</organismsDiffer>
    <experiments>2</experiments>
</comment>
<comment type="interaction">
    <interactant intactId="EBI-713291">
        <id>P51114</id>
    </interactant>
    <interactant intactId="EBI-350527">
        <id>Q15233</id>
        <label>NONO</label>
    </interactant>
    <organismsDiffer>false</organismsDiffer>
    <experiments>2</experiments>
</comment>
<comment type="interaction">
    <interactant intactId="EBI-713291">
        <id>P51114</id>
    </interactant>
    <interactant intactId="EBI-4289858">
        <id>Q86UU1</id>
        <label>PHLDB1</label>
    </interactant>
    <organismsDiffer>false</organismsDiffer>
    <experiments>2</experiments>
</comment>
<comment type="interaction">
    <interactant intactId="EBI-713291">
        <id>P51114</id>
    </interactant>
    <interactant intactId="EBI-712367">
        <id>Q9UI14</id>
        <label>RABAC1</label>
    </interactant>
    <organismsDiffer>false</organismsDiffer>
    <experiments>2</experiments>
</comment>
<comment type="interaction">
    <interactant intactId="EBI-713291">
        <id>P51114</id>
    </interactant>
    <interactant intactId="EBI-1043236">
        <id>Q86UR5</id>
        <label>RIMS1</label>
    </interactant>
    <organismsDiffer>false</organismsDiffer>
    <experiments>2</experiments>
</comment>
<comment type="interaction">
    <interactant intactId="EBI-713291">
        <id>P51114</id>
    </interactant>
    <interactant intactId="EBI-2682386">
        <id>Q96PV0</id>
        <label>SYNGAP1</label>
    </interactant>
    <organismsDiffer>false</organismsDiffer>
    <experiments>4</experiments>
</comment>
<comment type="interaction">
    <interactant intactId="EBI-713291">
        <id>P51114</id>
    </interactant>
    <interactant intactId="EBI-366083">
        <id>P04637</id>
        <label>TP53</label>
    </interactant>
    <organismsDiffer>false</organismsDiffer>
    <experiments>2</experiments>
</comment>
<comment type="interaction">
    <interactant intactId="EBI-713291">
        <id>P51114</id>
    </interactant>
    <interactant intactId="EBI-350864">
        <id>P07437</id>
        <label>TUBB</label>
    </interactant>
    <organismsDiffer>false</organismsDiffer>
    <experiments>2</experiments>
</comment>
<comment type="interaction">
    <interactant intactId="EBI-713291">
        <id>P51114</id>
    </interactant>
    <interactant intactId="EBI-25492388">
        <id>PRO_0000449621</id>
        <label>rep</label>
        <dbReference type="UniProtKB" id="P0DTD1"/>
    </interactant>
    <organismsDiffer>true</organismsDiffer>
    <experiments>5</experiments>
</comment>
<comment type="interaction">
    <interactant intactId="EBI-713291">
        <id>P51114</id>
    </interactant>
    <interactant intactId="EBI-25475877">
        <id>PRO_0000449627</id>
        <label>rep</label>
        <dbReference type="UniProtKB" id="P0DTD1"/>
    </interactant>
    <organismsDiffer>true</organismsDiffer>
    <experiments>3</experiments>
</comment>
<comment type="interaction">
    <interactant intactId="EBI-11022345">
        <id>P51114-2</id>
    </interactant>
    <interactant intactId="EBI-541426">
        <id>Q9BXS5</id>
        <label>AP1M1</label>
    </interactant>
    <organismsDiffer>false</organismsDiffer>
    <experiments>5</experiments>
</comment>
<comment type="interaction">
    <interactant intactId="EBI-11022345">
        <id>P51114-2</id>
    </interactant>
    <interactant intactId="EBI-2105445">
        <id>P51451</id>
        <label>BLK</label>
    </interactant>
    <organismsDiffer>false</organismsDiffer>
    <experiments>3</experiments>
</comment>
<comment type="interaction">
    <interactant intactId="EBI-11022345">
        <id>P51114-2</id>
    </interactant>
    <interactant intactId="EBI-358049">
        <id>Q13895</id>
        <label>BYSL</label>
    </interactant>
    <organismsDiffer>false</organismsDiffer>
    <experiments>3</experiments>
</comment>
<comment type="interaction">
    <interactant intactId="EBI-11022345">
        <id>P51114-2</id>
    </interactant>
    <interactant intactId="EBI-712912">
        <id>Q9HC52</id>
        <label>CBX8</label>
    </interactant>
    <organismsDiffer>false</organismsDiffer>
    <experiments>3</experiments>
</comment>
<comment type="interaction">
    <interactant intactId="EBI-11022345">
        <id>P51114-2</id>
    </interactant>
    <interactant intactId="EBI-374980">
        <id>O00311</id>
        <label>CDC7</label>
    </interactant>
    <organismsDiffer>false</organismsDiffer>
    <experiments>3</experiments>
</comment>
<comment type="interaction">
    <interactant intactId="EBI-11022345">
        <id>P51114-2</id>
    </interactant>
    <interactant intactId="EBI-746238">
        <id>Q07002</id>
        <label>CDK18</label>
    </interactant>
    <organismsDiffer>false</organismsDiffer>
    <experiments>3</experiments>
</comment>
<comment type="interaction">
    <interactant intactId="EBI-11022345">
        <id>P51114-2</id>
    </interactant>
    <interactant intactId="EBI-3919850">
        <id>Q8IVW4</id>
        <label>CDKL3</label>
    </interactant>
    <organismsDiffer>false</organismsDiffer>
    <experiments>3</experiments>
</comment>
<comment type="interaction">
    <interactant intactId="EBI-11022345">
        <id>P51114-2</id>
    </interactant>
    <interactant intactId="EBI-5453285">
        <id>Q2TBE0</id>
        <label>CWF19L2</label>
    </interactant>
    <organismsDiffer>false</organismsDiffer>
    <experiments>3</experiments>
</comment>
<comment type="interaction">
    <interactant intactId="EBI-11022345">
        <id>P51114-2</id>
    </interactant>
    <interactant intactId="EBI-351257">
        <id>P26196</id>
        <label>DDX6</label>
    </interactant>
    <organismsDiffer>false</organismsDiffer>
    <experiments>3</experiments>
</comment>
<comment type="interaction">
    <interactant intactId="EBI-11022345">
        <id>P51114-2</id>
    </interactant>
    <interactant intactId="EBI-1237044">
        <id>O43143</id>
        <label>DHX15</label>
    </interactant>
    <organismsDiffer>false</organismsDiffer>
    <experiments>3</experiments>
</comment>
<comment type="interaction">
    <interactant intactId="EBI-11022345">
        <id>P51114-2</id>
    </interactant>
    <interactant intactId="EBI-742350">
        <id>Q14241</id>
        <label>ELOA</label>
    </interactant>
    <organismsDiffer>false</organismsDiffer>
    <experiments>3</experiments>
</comment>
<comment type="interaction">
    <interactant intactId="EBI-11022345">
        <id>P51114-2</id>
    </interactant>
    <interactant intactId="EBI-1183307">
        <id>P19447</id>
        <label>ERCC3</label>
    </interactant>
    <organismsDiffer>false</organismsDiffer>
    <experiments>3</experiments>
</comment>
<comment type="interaction">
    <interactant intactId="EBI-11022345">
        <id>P51114-2</id>
    </interactant>
    <interactant intactId="EBI-3951849">
        <id>Q56NI9</id>
        <label>ESCO2</label>
    </interactant>
    <organismsDiffer>false</organismsDiffer>
    <experiments>3</experiments>
</comment>
<comment type="interaction">
    <interactant intactId="EBI-11022345">
        <id>P51114-2</id>
    </interactant>
    <interactant intactId="EBI-719941">
        <id>Q3B820</id>
        <label>FAM161A</label>
    </interactant>
    <organismsDiffer>false</organismsDiffer>
    <experiments>3</experiments>
</comment>
<comment type="interaction">
    <interactant intactId="EBI-11022345">
        <id>P51114-2</id>
    </interactant>
    <interactant intactId="EBI-6658203">
        <id>Q86YD7</id>
        <label>FAM90A1</label>
    </interactant>
    <organismsDiffer>false</organismsDiffer>
    <experiments>3</experiments>
</comment>
<comment type="interaction">
    <interactant intactId="EBI-11022345">
        <id>P51114-2</id>
    </interactant>
    <interactant intactId="EBI-11976595">
        <id>Q8IXW7</id>
        <label>FMR1</label>
    </interactant>
    <organismsDiffer>false</organismsDiffer>
    <experiments>3</experiments>
</comment>
<comment type="interaction">
    <interactant intactId="EBI-11022345">
        <id>P51114-2</id>
    </interactant>
    <interactant intactId="EBI-7960826">
        <id>Q8NHY3</id>
        <label>GAS2L2</label>
    </interactant>
    <organismsDiffer>false</organismsDiffer>
    <experiments>3</experiments>
</comment>
<comment type="interaction">
    <interactant intactId="EBI-11022345">
        <id>P51114-2</id>
    </interactant>
    <interactant intactId="EBI-8472129">
        <id>Q9HAQ2</id>
        <label>KIF9</label>
    </interactant>
    <organismsDiffer>false</organismsDiffer>
    <experiments>3</experiments>
</comment>
<comment type="interaction">
    <interactant intactId="EBI-11022345">
        <id>P51114-2</id>
    </interactant>
    <interactant intactId="EBI-739832">
        <id>Q8TBB1</id>
        <label>LNX1</label>
    </interactant>
    <organismsDiffer>false</organismsDiffer>
    <experiments>3</experiments>
</comment>
<comment type="interaction">
    <interactant intactId="EBI-11022345">
        <id>P51114-2</id>
    </interactant>
    <interactant intactId="EBI-299134">
        <id>P61326</id>
        <label>MAGOH</label>
    </interactant>
    <organismsDiffer>false</organismsDiffer>
    <experiments>3</experiments>
</comment>
<comment type="interaction">
    <interactant intactId="EBI-11022345">
        <id>P51114-2</id>
    </interactant>
    <interactant intactId="EBI-746778">
        <id>Q96A72</id>
        <label>MAGOHB</label>
    </interactant>
    <organismsDiffer>false</organismsDiffer>
    <experiments>3</experiments>
</comment>
<comment type="interaction">
    <interactant intactId="EBI-11022345">
        <id>P51114-2</id>
    </interactant>
    <interactant intactId="EBI-348259">
        <id>Q96EZ8</id>
        <label>MCRS1</label>
    </interactant>
    <organismsDiffer>false</organismsDiffer>
    <experiments>3</experiments>
</comment>
<comment type="interaction">
    <interactant intactId="EBI-11022345">
        <id>P51114-2</id>
    </interactant>
    <interactant intactId="EBI-1048159">
        <id>P55081</id>
        <label>MFAP1</label>
    </interactant>
    <organismsDiffer>false</organismsDiffer>
    <experiments>3</experiments>
</comment>
<comment type="interaction">
    <interactant intactId="EBI-11022345">
        <id>P51114-2</id>
    </interactant>
    <interactant intactId="EBI-14086479">
        <id>Q8IVT4</id>
        <label>MGC50722</label>
    </interactant>
    <organismsDiffer>false</organismsDiffer>
    <experiments>3</experiments>
</comment>
<comment type="interaction">
    <interactant intactId="EBI-11022345">
        <id>P51114-2</id>
    </interactant>
    <interactant intactId="EBI-742459">
        <id>Q9BU76</id>
        <label>MMTAG2</label>
    </interactant>
    <organismsDiffer>false</organismsDiffer>
    <experiments>5</experiments>
</comment>
<comment type="interaction">
    <interactant intactId="EBI-11022345">
        <id>P51114-2</id>
    </interactant>
    <interactant intactId="EBI-22734102">
        <id>Q8NEY8-5</id>
        <label>PPHLN1</label>
    </interactant>
    <organismsDiffer>false</organismsDiffer>
    <experiments>3</experiments>
</comment>
<comment type="interaction">
    <interactant intactId="EBI-11022345">
        <id>P51114-2</id>
    </interactant>
    <interactant intactId="EBI-2860740">
        <id>Q96QH2</id>
        <label>PRAM1</label>
    </interactant>
    <organismsDiffer>false</organismsDiffer>
    <experiments>3</experiments>
</comment>
<comment type="interaction">
    <interactant intactId="EBI-11022345">
        <id>P51114-2</id>
    </interactant>
    <interactant intactId="EBI-2798416">
        <id>Q99633</id>
        <label>PRPF18</label>
    </interactant>
    <organismsDiffer>false</organismsDiffer>
    <experiments>3</experiments>
</comment>
<comment type="interaction">
    <interactant intactId="EBI-11022345">
        <id>P51114-2</id>
    </interactant>
    <interactant intactId="EBI-1567797">
        <id>Q8WWY3</id>
        <label>PRPF31</label>
    </interactant>
    <organismsDiffer>false</organismsDiffer>
    <experiments>3</experiments>
</comment>
<comment type="interaction">
    <interactant intactId="EBI-11022345">
        <id>P51114-2</id>
    </interactant>
    <interactant intactId="EBI-593303">
        <id>P78362</id>
        <label>SRPK2</label>
    </interactant>
    <organismsDiffer>false</organismsDiffer>
    <experiments>3</experiments>
</comment>
<comment type="interaction">
    <interactant intactId="EBI-11022345">
        <id>P51114-2</id>
    </interactant>
    <interactant intactId="EBI-749295">
        <id>O75716</id>
        <label>STK16</label>
    </interactant>
    <organismsDiffer>false</organismsDiffer>
    <experiments>3</experiments>
</comment>
<comment type="interaction">
    <interactant intactId="EBI-11022345">
        <id>P51114-2</id>
    </interactant>
    <interactant intactId="EBI-740595">
        <id>Q9UMX1</id>
        <label>SUFU</label>
    </interactant>
    <organismsDiffer>false</organismsDiffer>
    <experiments>3</experiments>
</comment>
<comment type="interaction">
    <interactant intactId="EBI-11022345">
        <id>P51114-2</id>
    </interactant>
    <interactant intactId="EBI-10246152">
        <id>Q5T7P8-2</id>
        <label>SYT6</label>
    </interactant>
    <organismsDiffer>false</organismsDiffer>
    <experiments>3</experiments>
</comment>
<comment type="interaction">
    <interactant intactId="EBI-11022345">
        <id>P51114-2</id>
    </interactant>
    <interactant intactId="EBI-8787464">
        <id>Q9NU19</id>
        <label>TBC1D22B</label>
    </interactant>
    <organismsDiffer>false</organismsDiffer>
    <experiments>3</experiments>
</comment>
<comment type="interaction">
    <interactant intactId="EBI-11022345">
        <id>P51114-2</id>
    </interactant>
    <interactant intactId="EBI-710310">
        <id>Q15560</id>
        <label>TCEA2</label>
    </interactant>
    <organismsDiffer>false</organismsDiffer>
    <experiments>3</experiments>
</comment>
<comment type="interaction">
    <interactant intactId="EBI-11022345">
        <id>P51114-2</id>
    </interactant>
    <interactant intactId="EBI-12371223">
        <id>Q7Z4N2-7</id>
        <label>TRPM1</label>
    </interactant>
    <organismsDiffer>false</organismsDiffer>
    <experiments>3</experiments>
</comment>
<comment type="interaction">
    <interactant intactId="EBI-11022345">
        <id>P51114-2</id>
    </interactant>
    <interactant intactId="EBI-347762">
        <id>Q14157</id>
        <label>UBAP2L</label>
    </interactant>
    <organismsDiffer>false</organismsDiffer>
    <experiments>3</experiments>
</comment>
<comment type="interaction">
    <interactant intactId="EBI-11022345">
        <id>P51114-2</id>
    </interactant>
    <interactant intactId="EBI-515331">
        <id>P07947</id>
        <label>YES1</label>
    </interactant>
    <organismsDiffer>false</organismsDiffer>
    <experiments>3</experiments>
</comment>
<comment type="interaction">
    <interactant intactId="EBI-11022345">
        <id>P51114-2</id>
    </interactant>
    <interactant intactId="EBI-2682299">
        <id>Q96NC0</id>
        <label>ZMAT2</label>
    </interactant>
    <organismsDiffer>false</organismsDiffer>
    <experiments>3</experiments>
</comment>
<comment type="interaction">
    <interactant intactId="EBI-11022345">
        <id>P51114-2</id>
    </interactant>
    <interactant intactId="EBI-740727">
        <id>Q8TAU3</id>
        <label>ZNF417</label>
    </interactant>
    <organismsDiffer>false</organismsDiffer>
    <experiments>3</experiments>
</comment>
<comment type="interaction">
    <interactant intactId="EBI-11022345">
        <id>P51114-2</id>
    </interactant>
    <interactant intactId="EBI-11962468">
        <id>Q7Z4V0</id>
        <label>ZNF438</label>
    </interactant>
    <organismsDiffer>false</organismsDiffer>
    <experiments>3</experiments>
</comment>
<comment type="interaction">
    <interactant intactId="EBI-11022345">
        <id>P51114-2</id>
    </interactant>
    <interactant intactId="EBI-7138235">
        <id>Q9NQZ8</id>
        <label>ZNF71</label>
    </interactant>
    <organismsDiffer>false</organismsDiffer>
    <experiments>3</experiments>
</comment>
<comment type="subcellular location">
    <subcellularLocation>
        <location evidence="20 24">Cytoplasm</location>
        <location evidence="20 24">Cytoplasmic ribonucleoprotein granule</location>
    </subcellularLocation>
    <subcellularLocation>
        <location evidence="12">Cytoplasm</location>
        <location evidence="12">Stress granule</location>
    </subcellularLocation>
    <subcellularLocation>
        <location evidence="19 26 28">Cytoplasm</location>
    </subcellularLocation>
    <subcellularLocation>
        <location evidence="4">Cell projection</location>
        <location evidence="4">Dendrite</location>
    </subcellularLocation>
    <subcellularLocation>
        <location evidence="4">Cell projection</location>
        <location evidence="4">Dendritic spine</location>
    </subcellularLocation>
    <subcellularLocation>
        <location evidence="4">Cell projection</location>
        <location evidence="4">Axon</location>
    </subcellularLocation>
    <subcellularLocation>
        <location evidence="20">Nucleus envelope</location>
    </subcellularLocation>
    <subcellularLocation>
        <location evidence="4">Postsynapse</location>
    </subcellularLocation>
    <text evidence="4 12">Specifically localizes to cytoplasmic ribonucleoprotein membraneless compartments (By similarity). Localizes to stress granules following phosphorylation at Ser-420 by PAK1 (PubMed:20417602). Adjacent to Z-lines in muscles (By similarity).</text>
</comment>
<comment type="alternative products">
    <event type="alternative splicing"/>
    <isoform>
        <id>P51114-1</id>
        <name>1</name>
        <name>Long</name>
        <sequence type="displayed"/>
    </isoform>
    <isoform>
        <id>P51114-2</id>
        <name>2</name>
        <name>b</name>
        <name>Short</name>
        <sequence type="described" ref="VSP_019710 VSP_019711"/>
    </isoform>
    <isoform>
        <id>P51114-3</id>
        <name>3</name>
        <sequence type="described" ref="VSP_019709"/>
    </isoform>
    <text>Alternative splicing appears to be tissue-specific.</text>
</comment>
<comment type="tissue specificity">
    <text evidence="26 28">Expressed in all tissues examined including heart, brain, kidney and testis (PubMed:7781595, PubMed:9259278). In brain, present at high level in neurons and especially in the Purkinje cells at the interface between the granular layer and the molecular layer (at protein level) (PubMed:9259278).</text>
</comment>
<comment type="induction">
    <text evidence="18">By Interleukin-19 (IL19).</text>
</comment>
<comment type="domain">
    <text evidence="13">The tandem Agenet-like domains preferentially recognize trimethylated histone peptides.</text>
</comment>
<comment type="domain">
    <text evidence="4">Disordered region at the C-terminus undergoes liquid-liquid phase separation (LLPS) for the formation of a membraneless compartment that stores mRNAs.</text>
</comment>
<comment type="domain">
    <text evidence="24">CC1 and CC2 domains are required for homodimerization and FXR1-network nucleation. CC domains also mediate interaction with other proteins containing similar CC domains.</text>
</comment>
<comment type="PTM">
    <text evidence="4 12">Phosphorylation at Ser-420 by PAK1 promotes its relocalization to stress granules and activity (PubMed:20417602). Phosphorylated by MAPK1/ERK2, promoting subsequent phosphorylation by GSK3B (By similarity). Phosphorylated by GSK3B, promoting ubiquitination and degradation by the proteasome (By similarity).</text>
</comment>
<comment type="PTM">
    <text evidence="4 17 22">Ubiquitinated by the SCF(FBXO4) complex, leading to its degradation by the proteasome: ubiquitination by the SCF(FBXO4) complex takes place following phosphorylation by GSK3B (PubMed:29142209). Ubiquitinated and degraded in a GSK3B-dependent manner in during both scaling and sleep deprivation (By similarity). Ubiquitinated via 'Lys-63'-linked ubiquitin, leading to its degradation: interaction with CEP63 inhibits 'Lys-63'-linked ubiquitination (PubMed:35989368).</text>
</comment>
<comment type="disease" evidence="19">
    <disease id="DI-05793">
        <name>Congenital myopathy 9A</name>
        <acronym>CMYO9A</acronym>
        <description>An autosomal recessive muscular disorder characterized by severe hypotonia apparent at birth, poor feeding, ulnar deviation of the hands, laterally deviated feet, fractures of the long bones, respiratory insufficiency due to muscle weakness, and death in infancy.</description>
        <dbReference type="MIM" id="618822"/>
    </disease>
    <text>The disease is caused by variants affecting the gene represented in this entry.</text>
</comment>
<comment type="disease" evidence="19">
    <disease id="DI-05794">
        <name>Congenital myopathy 9B, proximal, with minicore lesions</name>
        <acronym>CMYO9B</acronym>
        <description>An autosomal recessive, slowly progressive muscular disorder characterized by primarily proximal muscle weakness, neonatal hypotonia leading to delayed motor development, mildly delayed walking in childhood, and difficulty running or climbing. Cardiac function is unaffected, but most patients have obstructive sleep apnea. Muscle biopsy shows type 1 fiber predominance with disorganized Z-lines and minicores that disrupt the myofibrillar striation pattern.</description>
        <dbReference type="MIM" id="618823"/>
    </disease>
    <text>The disease is caused by variants affecting the gene represented in this entry.</text>
</comment>
<comment type="similarity">
    <text evidence="33">Belongs to the FMR1 family.</text>
</comment>
<evidence type="ECO:0000250" key="1">
    <source>
        <dbReference type="UniProtKB" id="P35922"/>
    </source>
</evidence>
<evidence type="ECO:0000250" key="2">
    <source>
        <dbReference type="UniProtKB" id="P51116"/>
    </source>
</evidence>
<evidence type="ECO:0000250" key="3">
    <source>
        <dbReference type="UniProtKB" id="Q5XI81"/>
    </source>
</evidence>
<evidence type="ECO:0000250" key="4">
    <source>
        <dbReference type="UniProtKB" id="Q61584"/>
    </source>
</evidence>
<evidence type="ECO:0000255" key="5">
    <source>
        <dbReference type="PROSITE-ProRule" id="PRU00117"/>
    </source>
</evidence>
<evidence type="ECO:0000255" key="6">
    <source>
        <dbReference type="PROSITE-ProRule" id="PRU00973"/>
    </source>
</evidence>
<evidence type="ECO:0000256" key="7">
    <source>
        <dbReference type="SAM" id="MobiDB-lite"/>
    </source>
</evidence>
<evidence type="ECO:0000269" key="8">
    <source>
    </source>
</evidence>
<evidence type="ECO:0000269" key="9">
    <source>
    </source>
</evidence>
<evidence type="ECO:0000269" key="10">
    <source>
    </source>
</evidence>
<evidence type="ECO:0000269" key="11">
    <source>
    </source>
</evidence>
<evidence type="ECO:0000269" key="12">
    <source>
    </source>
</evidence>
<evidence type="ECO:0000269" key="13">
    <source>
    </source>
</evidence>
<evidence type="ECO:0000269" key="14">
    <source>
    </source>
</evidence>
<evidence type="ECO:0000269" key="15">
    <source>
    </source>
</evidence>
<evidence type="ECO:0000269" key="16">
    <source>
    </source>
</evidence>
<evidence type="ECO:0000269" key="17">
    <source>
    </source>
</evidence>
<evidence type="ECO:0000269" key="18">
    <source>
    </source>
</evidence>
<evidence type="ECO:0000269" key="19">
    <source>
    </source>
</evidence>
<evidence type="ECO:0000269" key="20">
    <source>
    </source>
</evidence>
<evidence type="ECO:0000269" key="21">
    <source>
    </source>
</evidence>
<evidence type="ECO:0000269" key="22">
    <source>
    </source>
</evidence>
<evidence type="ECO:0000269" key="23">
    <source>
    </source>
</evidence>
<evidence type="ECO:0000269" key="24">
    <source>
    </source>
</evidence>
<evidence type="ECO:0000269" key="25">
    <source>
    </source>
</evidence>
<evidence type="ECO:0000269" key="26">
    <source>
    </source>
</evidence>
<evidence type="ECO:0000269" key="27">
    <source>
    </source>
</evidence>
<evidence type="ECO:0000269" key="28">
    <source>
    </source>
</evidence>
<evidence type="ECO:0000269" key="29">
    <source ref="5"/>
</evidence>
<evidence type="ECO:0000303" key="30">
    <source>
    </source>
</evidence>
<evidence type="ECO:0000303" key="31">
    <source>
    </source>
</evidence>
<evidence type="ECO:0000303" key="32">
    <source ref="2"/>
</evidence>
<evidence type="ECO:0000305" key="33"/>
<evidence type="ECO:0000312" key="34">
    <source>
        <dbReference type="HGNC" id="HGNC:4023"/>
    </source>
</evidence>
<evidence type="ECO:0007744" key="35">
    <source>
    </source>
</evidence>
<evidence type="ECO:0007744" key="36">
    <source>
    </source>
</evidence>
<evidence type="ECO:0007744" key="37">
    <source>
    </source>
</evidence>
<evidence type="ECO:0007744" key="38">
    <source>
    </source>
</evidence>
<evidence type="ECO:0007744" key="39">
    <source>
    </source>
</evidence>
<evidence type="ECO:0007744" key="40">
    <source>
    </source>
</evidence>
<evidence type="ECO:0007744" key="41">
    <source>
    </source>
</evidence>
<evidence type="ECO:0007829" key="42">
    <source>
        <dbReference type="PDB" id="2CPQ"/>
    </source>
</evidence>
<evidence type="ECO:0007829" key="43">
    <source>
        <dbReference type="PDB" id="3O8V"/>
    </source>
</evidence>
<gene>
    <name evidence="31 34" type="primary">FXR1</name>
</gene>
<accession>P51114</accession>
<accession>A8K9B8</accession>
<accession>Q7Z450</accession>
<accession>Q8N6R8</accession>
<proteinExistence type="evidence at protein level"/>
<dbReference type="EMBL" id="U25165">
    <property type="protein sequence ID" value="AAC50155.1"/>
    <property type="molecule type" value="mRNA"/>
</dbReference>
<dbReference type="EMBL" id="AY341428">
    <property type="protein sequence ID" value="AAQ20045.1"/>
    <property type="molecule type" value="mRNA"/>
</dbReference>
<dbReference type="EMBL" id="AK292633">
    <property type="protein sequence ID" value="BAF85322.1"/>
    <property type="molecule type" value="mRNA"/>
</dbReference>
<dbReference type="EMBL" id="BC028983">
    <property type="protein sequence ID" value="AAH28983.1"/>
    <property type="molecule type" value="mRNA"/>
</dbReference>
<dbReference type="CCDS" id="CCDS3238.1">
    <molecule id="P51114-1"/>
</dbReference>
<dbReference type="CCDS" id="CCDS33894.1">
    <molecule id="P51114-3"/>
</dbReference>
<dbReference type="CCDS" id="CCDS46965.1">
    <molecule id="P51114-2"/>
</dbReference>
<dbReference type="PIR" id="S55330">
    <property type="entry name" value="S55330"/>
</dbReference>
<dbReference type="RefSeq" id="NP_001013456.1">
    <molecule id="P51114-2"/>
    <property type="nucleotide sequence ID" value="NM_001013438.3"/>
</dbReference>
<dbReference type="RefSeq" id="NP_001013457.1">
    <molecule id="P51114-3"/>
    <property type="nucleotide sequence ID" value="NM_001013439.3"/>
</dbReference>
<dbReference type="RefSeq" id="NP_005078.2">
    <molecule id="P51114-1"/>
    <property type="nucleotide sequence ID" value="NM_005087.4"/>
</dbReference>
<dbReference type="PDB" id="2CPQ">
    <property type="method" value="NMR"/>
    <property type="chains" value="A=212-289"/>
</dbReference>
<dbReference type="PDB" id="3KUF">
    <property type="method" value="X-ray"/>
    <property type="resolution" value="2.70 A"/>
    <property type="chains" value="A=2-132"/>
</dbReference>
<dbReference type="PDB" id="3O8V">
    <property type="method" value="X-ray"/>
    <property type="resolution" value="2.50 A"/>
    <property type="chains" value="A=2-132"/>
</dbReference>
<dbReference type="PDBsum" id="2CPQ"/>
<dbReference type="PDBsum" id="3KUF"/>
<dbReference type="PDBsum" id="3O8V"/>
<dbReference type="SMR" id="P51114"/>
<dbReference type="BioGRID" id="113760">
    <property type="interactions" value="649"/>
</dbReference>
<dbReference type="ComplexPortal" id="CPX-8306">
    <property type="entry name" value="FMR1-FXR1 RNA-binding complex"/>
</dbReference>
<dbReference type="ComplexPortal" id="CPX-8323">
    <property type="entry name" value="FXR1 RNA-binding homodimer"/>
</dbReference>
<dbReference type="ComplexPortal" id="CPX-8342">
    <property type="entry name" value="FXR1-FXR2 RNA-binding complex"/>
</dbReference>
<dbReference type="CORUM" id="P51114"/>
<dbReference type="DIP" id="DIP-40789N"/>
<dbReference type="FunCoup" id="P51114">
    <property type="interactions" value="2210"/>
</dbReference>
<dbReference type="IntAct" id="P51114">
    <property type="interactions" value="385"/>
</dbReference>
<dbReference type="MINT" id="P51114"/>
<dbReference type="STRING" id="9606.ENSP00000350170"/>
<dbReference type="BindingDB" id="P51114"/>
<dbReference type="ChEMBL" id="CHEMBL3879858"/>
<dbReference type="GlyCosmos" id="P51114">
    <property type="glycosylation" value="1 site, 1 glycan"/>
</dbReference>
<dbReference type="GlyGen" id="P51114">
    <property type="glycosylation" value="1 site, 1 O-linked glycan (1 site)"/>
</dbReference>
<dbReference type="iPTMnet" id="P51114"/>
<dbReference type="MetOSite" id="P51114"/>
<dbReference type="PhosphoSitePlus" id="P51114"/>
<dbReference type="SwissPalm" id="P51114"/>
<dbReference type="BioMuta" id="FXR1"/>
<dbReference type="DMDM" id="189047132"/>
<dbReference type="jPOST" id="P51114"/>
<dbReference type="MassIVE" id="P51114"/>
<dbReference type="PaxDb" id="9606-ENSP00000350170"/>
<dbReference type="PeptideAtlas" id="P51114"/>
<dbReference type="ProteomicsDB" id="56278">
    <molecule id="P51114-1"/>
</dbReference>
<dbReference type="ProteomicsDB" id="56279">
    <molecule id="P51114-2"/>
</dbReference>
<dbReference type="ProteomicsDB" id="56280">
    <molecule id="P51114-3"/>
</dbReference>
<dbReference type="Pumba" id="P51114"/>
<dbReference type="Antibodypedia" id="18845">
    <property type="antibodies" value="345 antibodies from 39 providers"/>
</dbReference>
<dbReference type="DNASU" id="8087"/>
<dbReference type="Ensembl" id="ENST00000305586.11">
    <molecule id="P51114-3"/>
    <property type="protein sequence ID" value="ENSP00000307633.7"/>
    <property type="gene ID" value="ENSG00000114416.19"/>
</dbReference>
<dbReference type="Ensembl" id="ENST00000357559.9">
    <molecule id="P51114-1"/>
    <property type="protein sequence ID" value="ENSP00000350170.3"/>
    <property type="gene ID" value="ENSG00000114416.19"/>
</dbReference>
<dbReference type="Ensembl" id="ENST00000445140.6">
    <molecule id="P51114-2"/>
    <property type="protein sequence ID" value="ENSP00000388828.2"/>
    <property type="gene ID" value="ENSG00000114416.19"/>
</dbReference>
<dbReference type="GeneID" id="8087"/>
<dbReference type="KEGG" id="hsa:8087"/>
<dbReference type="MANE-Select" id="ENST00000357559.9">
    <property type="protein sequence ID" value="ENSP00000350170.3"/>
    <property type="RefSeq nucleotide sequence ID" value="NM_005087.4"/>
    <property type="RefSeq protein sequence ID" value="NP_005078.2"/>
</dbReference>
<dbReference type="UCSC" id="uc003fkp.4">
    <molecule id="P51114-1"/>
    <property type="organism name" value="human"/>
</dbReference>
<dbReference type="AGR" id="HGNC:4023"/>
<dbReference type="CTD" id="8087"/>
<dbReference type="DisGeNET" id="8087"/>
<dbReference type="GeneCards" id="FXR1"/>
<dbReference type="HGNC" id="HGNC:4023">
    <property type="gene designation" value="FXR1"/>
</dbReference>
<dbReference type="HPA" id="ENSG00000114416">
    <property type="expression patterns" value="Group enriched (skeletal muscle, tongue)"/>
</dbReference>
<dbReference type="MalaCards" id="FXR1"/>
<dbReference type="MIM" id="600819">
    <property type="type" value="gene"/>
</dbReference>
<dbReference type="MIM" id="618822">
    <property type="type" value="phenotype"/>
</dbReference>
<dbReference type="MIM" id="618823">
    <property type="type" value="phenotype"/>
</dbReference>
<dbReference type="neXtProt" id="NX_P51114"/>
<dbReference type="OpenTargets" id="ENSG00000114416"/>
<dbReference type="PharmGKB" id="PA28439"/>
<dbReference type="VEuPathDB" id="HostDB:ENSG00000114416"/>
<dbReference type="eggNOG" id="ENOG502QPKJ">
    <property type="taxonomic scope" value="Eukaryota"/>
</dbReference>
<dbReference type="GeneTree" id="ENSGT00950000183189"/>
<dbReference type="HOGENOM" id="CLU_020699_3_0_1"/>
<dbReference type="InParanoid" id="P51114"/>
<dbReference type="OMA" id="WPARITK"/>
<dbReference type="OrthoDB" id="424249at2759"/>
<dbReference type="PAN-GO" id="P51114">
    <property type="GO annotations" value="22 GO annotations based on evolutionary models"/>
</dbReference>
<dbReference type="PhylomeDB" id="P51114"/>
<dbReference type="TreeFam" id="TF105427"/>
<dbReference type="PathwayCommons" id="P51114"/>
<dbReference type="Reactome" id="R-HSA-6802952">
    <property type="pathway name" value="Signaling by BRAF and RAF1 fusions"/>
</dbReference>
<dbReference type="SignaLink" id="P51114"/>
<dbReference type="SIGNOR" id="P51114"/>
<dbReference type="BioGRID-ORCS" id="8087">
    <property type="hits" value="21 hits in 1165 CRISPR screens"/>
</dbReference>
<dbReference type="CD-CODE" id="232F8A39">
    <property type="entry name" value="P-body"/>
</dbReference>
<dbReference type="CD-CODE" id="DEE660B4">
    <property type="entry name" value="Stress granule"/>
</dbReference>
<dbReference type="ChiTaRS" id="FXR1">
    <property type="organism name" value="human"/>
</dbReference>
<dbReference type="EvolutionaryTrace" id="P51114"/>
<dbReference type="GeneWiki" id="FXR1"/>
<dbReference type="GenomeRNAi" id="8087"/>
<dbReference type="Pharos" id="P51114">
    <property type="development level" value="Tbio"/>
</dbReference>
<dbReference type="PRO" id="PR:P51114"/>
<dbReference type="Proteomes" id="UP000005640">
    <property type="component" value="Chromosome 3"/>
</dbReference>
<dbReference type="RNAct" id="P51114">
    <property type="molecule type" value="protein"/>
</dbReference>
<dbReference type="Bgee" id="ENSG00000114416">
    <property type="expression patterns" value="Expressed in sperm and 207 other cell types or tissues"/>
</dbReference>
<dbReference type="ExpressionAtlas" id="P51114">
    <property type="expression patterns" value="baseline and differential"/>
</dbReference>
<dbReference type="GO" id="GO:0030424">
    <property type="term" value="C:axon"/>
    <property type="evidence" value="ECO:0007669"/>
    <property type="project" value="UniProtKB-SubCell"/>
</dbReference>
<dbReference type="GO" id="GO:0043034">
    <property type="term" value="C:costamere"/>
    <property type="evidence" value="ECO:0007669"/>
    <property type="project" value="Ensembl"/>
</dbReference>
<dbReference type="GO" id="GO:0005737">
    <property type="term" value="C:cytoplasm"/>
    <property type="evidence" value="ECO:0000314"/>
    <property type="project" value="UniProtKB"/>
</dbReference>
<dbReference type="GO" id="GO:0036464">
    <property type="term" value="C:cytoplasmic ribonucleoprotein granule"/>
    <property type="evidence" value="ECO:0000314"/>
    <property type="project" value="UniProtKB"/>
</dbReference>
<dbReference type="GO" id="GO:0010494">
    <property type="term" value="C:cytoplasmic stress granule"/>
    <property type="evidence" value="ECO:0000314"/>
    <property type="project" value="UniProtKB"/>
</dbReference>
<dbReference type="GO" id="GO:0005829">
    <property type="term" value="C:cytosol"/>
    <property type="evidence" value="ECO:0000314"/>
    <property type="project" value="HPA"/>
</dbReference>
<dbReference type="GO" id="GO:0043197">
    <property type="term" value="C:dendritic spine"/>
    <property type="evidence" value="ECO:0007669"/>
    <property type="project" value="UniProtKB-SubCell"/>
</dbReference>
<dbReference type="GO" id="GO:0098978">
    <property type="term" value="C:glutamatergic synapse"/>
    <property type="evidence" value="ECO:0007669"/>
    <property type="project" value="Ensembl"/>
</dbReference>
<dbReference type="GO" id="GO:0043232">
    <property type="term" value="C:intracellular membraneless organelle"/>
    <property type="evidence" value="ECO:0000314"/>
    <property type="project" value="UniProt"/>
</dbReference>
<dbReference type="GO" id="GO:0016020">
    <property type="term" value="C:membrane"/>
    <property type="evidence" value="ECO:0007005"/>
    <property type="project" value="UniProtKB"/>
</dbReference>
<dbReference type="GO" id="GO:0043005">
    <property type="term" value="C:neuron projection"/>
    <property type="evidence" value="ECO:0000318"/>
    <property type="project" value="GO_Central"/>
</dbReference>
<dbReference type="GO" id="GO:0005635">
    <property type="term" value="C:nuclear envelope"/>
    <property type="evidence" value="ECO:0000314"/>
    <property type="project" value="UniProtKB"/>
</dbReference>
<dbReference type="GO" id="GO:0005730">
    <property type="term" value="C:nucleolus"/>
    <property type="evidence" value="ECO:0000304"/>
    <property type="project" value="ProtInc"/>
</dbReference>
<dbReference type="GO" id="GO:0005634">
    <property type="term" value="C:nucleus"/>
    <property type="evidence" value="ECO:0000318"/>
    <property type="project" value="GO_Central"/>
</dbReference>
<dbReference type="GO" id="GO:0048471">
    <property type="term" value="C:perinuclear region of cytoplasm"/>
    <property type="evidence" value="ECO:0007669"/>
    <property type="project" value="Ensembl"/>
</dbReference>
<dbReference type="GO" id="GO:0098793">
    <property type="term" value="C:presynapse"/>
    <property type="evidence" value="ECO:0007669"/>
    <property type="project" value="GOC"/>
</dbReference>
<dbReference type="GO" id="GO:0005840">
    <property type="term" value="C:ribosome"/>
    <property type="evidence" value="ECO:0007669"/>
    <property type="project" value="Ensembl"/>
</dbReference>
<dbReference type="GO" id="GO:0140693">
    <property type="term" value="F:molecular condensate scaffold activity"/>
    <property type="evidence" value="ECO:0000314"/>
    <property type="project" value="UniProt"/>
</dbReference>
<dbReference type="GO" id="GO:0035925">
    <property type="term" value="F:mRNA 3'-UTR AU-rich region binding"/>
    <property type="evidence" value="ECO:0000314"/>
    <property type="project" value="UniProtKB"/>
</dbReference>
<dbReference type="GO" id="GO:0003730">
    <property type="term" value="F:mRNA 3'-UTR binding"/>
    <property type="evidence" value="ECO:0000314"/>
    <property type="project" value="UniProt"/>
</dbReference>
<dbReference type="GO" id="GO:0046982">
    <property type="term" value="F:protein heterodimerization activity"/>
    <property type="evidence" value="ECO:0000314"/>
    <property type="project" value="UniProtKB"/>
</dbReference>
<dbReference type="GO" id="GO:0042803">
    <property type="term" value="F:protein homodimerization activity"/>
    <property type="evidence" value="ECO:0000314"/>
    <property type="project" value="UniProtKB"/>
</dbReference>
<dbReference type="GO" id="GO:0043021">
    <property type="term" value="F:ribonucleoprotein complex binding"/>
    <property type="evidence" value="ECO:0007669"/>
    <property type="project" value="Ensembl"/>
</dbReference>
<dbReference type="GO" id="GO:0003723">
    <property type="term" value="F:RNA binding"/>
    <property type="evidence" value="ECO:0000314"/>
    <property type="project" value="UniProtKB"/>
</dbReference>
<dbReference type="GO" id="GO:0033592">
    <property type="term" value="F:RNA strand annealing activity"/>
    <property type="evidence" value="ECO:0000314"/>
    <property type="project" value="UniProtKB"/>
</dbReference>
<dbReference type="GO" id="GO:0045182">
    <property type="term" value="F:translation regulator activity"/>
    <property type="evidence" value="ECO:0000318"/>
    <property type="project" value="GO_Central"/>
</dbReference>
<dbReference type="GO" id="GO:0048513">
    <property type="term" value="P:animal organ development"/>
    <property type="evidence" value="ECO:0000318"/>
    <property type="project" value="GO_Central"/>
</dbReference>
<dbReference type="GO" id="GO:0006915">
    <property type="term" value="P:apoptotic process"/>
    <property type="evidence" value="ECO:0000304"/>
    <property type="project" value="ProtInc"/>
</dbReference>
<dbReference type="GO" id="GO:0021542">
    <property type="term" value="P:dentate gyrus development"/>
    <property type="evidence" value="ECO:0000250"/>
    <property type="project" value="UniProtKB"/>
</dbReference>
<dbReference type="GO" id="GO:0140694">
    <property type="term" value="P:membraneless organelle assembly"/>
    <property type="evidence" value="ECO:0000314"/>
    <property type="project" value="UniProt"/>
</dbReference>
<dbReference type="GO" id="GO:0061157">
    <property type="term" value="P:mRNA destabilization"/>
    <property type="evidence" value="ECO:0000314"/>
    <property type="project" value="UniProtKB"/>
</dbReference>
<dbReference type="GO" id="GO:0051028">
    <property type="term" value="P:mRNA transport"/>
    <property type="evidence" value="ECO:0000318"/>
    <property type="project" value="GO_Central"/>
</dbReference>
<dbReference type="GO" id="GO:0007517">
    <property type="term" value="P:muscle organ development"/>
    <property type="evidence" value="ECO:0000315"/>
    <property type="project" value="UniProtKB"/>
</dbReference>
<dbReference type="GO" id="GO:0050728">
    <property type="term" value="P:negative regulation of inflammatory response"/>
    <property type="evidence" value="ECO:0000314"/>
    <property type="project" value="UniProtKB"/>
</dbReference>
<dbReference type="GO" id="GO:1900272">
    <property type="term" value="P:negative regulation of long-term synaptic potentiation"/>
    <property type="evidence" value="ECO:0000250"/>
    <property type="project" value="UniProtKB"/>
</dbReference>
<dbReference type="GO" id="GO:1902373">
    <property type="term" value="P:negative regulation of mRNA catabolic process"/>
    <property type="evidence" value="ECO:0000315"/>
    <property type="project" value="UniProtKB"/>
</dbReference>
<dbReference type="GO" id="GO:0017148">
    <property type="term" value="P:negative regulation of translation"/>
    <property type="evidence" value="ECO:0007669"/>
    <property type="project" value="Ensembl"/>
</dbReference>
<dbReference type="GO" id="GO:0032720">
    <property type="term" value="P:negative regulation of tumor necrosis factor production"/>
    <property type="evidence" value="ECO:0000250"/>
    <property type="project" value="UniProtKB"/>
</dbReference>
<dbReference type="GO" id="GO:0051292">
    <property type="term" value="P:nuclear pore complex assembly"/>
    <property type="evidence" value="ECO:0000314"/>
    <property type="project" value="UniProtKB"/>
</dbReference>
<dbReference type="GO" id="GO:0051664">
    <property type="term" value="P:nuclear pore localization"/>
    <property type="evidence" value="ECO:0000314"/>
    <property type="project" value="UniProtKB"/>
</dbReference>
<dbReference type="GO" id="GO:0048170">
    <property type="term" value="P:positive regulation of long-term neuronal synaptic plasticity"/>
    <property type="evidence" value="ECO:0000318"/>
    <property type="project" value="GO_Central"/>
</dbReference>
<dbReference type="GO" id="GO:2000637">
    <property type="term" value="P:positive regulation of miRNA-mediated gene silencing"/>
    <property type="evidence" value="ECO:0000314"/>
    <property type="project" value="UniProtKB"/>
</dbReference>
<dbReference type="GO" id="GO:0035025">
    <property type="term" value="P:positive regulation of Rho protein signal transduction"/>
    <property type="evidence" value="ECO:0000314"/>
    <property type="project" value="UniProt"/>
</dbReference>
<dbReference type="GO" id="GO:0045727">
    <property type="term" value="P:positive regulation of translation"/>
    <property type="evidence" value="ECO:0000314"/>
    <property type="project" value="UniProtKB"/>
</dbReference>
<dbReference type="GO" id="GO:0045187">
    <property type="term" value="P:regulation of circadian sleep/wake cycle, sleep"/>
    <property type="evidence" value="ECO:0000250"/>
    <property type="project" value="UniProtKB"/>
</dbReference>
<dbReference type="GO" id="GO:0043488">
    <property type="term" value="P:regulation of mRNA stability"/>
    <property type="evidence" value="ECO:0000318"/>
    <property type="project" value="GO_Central"/>
</dbReference>
<dbReference type="GO" id="GO:0050767">
    <property type="term" value="P:regulation of neurogenesis"/>
    <property type="evidence" value="ECO:0000250"/>
    <property type="project" value="UniProtKB"/>
</dbReference>
<dbReference type="GO" id="GO:0051966">
    <property type="term" value="P:regulation of synaptic transmission, glutamatergic"/>
    <property type="evidence" value="ECO:0000250"/>
    <property type="project" value="UniProtKB"/>
</dbReference>
<dbReference type="GO" id="GO:0099577">
    <property type="term" value="P:regulation of translation at presynapse, modulating synaptic transmission"/>
    <property type="evidence" value="ECO:0000318"/>
    <property type="project" value="GO_Central"/>
</dbReference>
<dbReference type="GO" id="GO:0060538">
    <property type="term" value="P:skeletal muscle organ development"/>
    <property type="evidence" value="ECO:0000315"/>
    <property type="project" value="UniProtKB"/>
</dbReference>
<dbReference type="GO" id="GO:0007286">
    <property type="term" value="P:spermatid development"/>
    <property type="evidence" value="ECO:0000250"/>
    <property type="project" value="UniProtKB"/>
</dbReference>
<dbReference type="CDD" id="cd22504">
    <property type="entry name" value="KH_I_FXR1_rpt1"/>
    <property type="match status" value="1"/>
</dbReference>
<dbReference type="CDD" id="cd22507">
    <property type="entry name" value="KH_I_FXR1_rpt2"/>
    <property type="match status" value="1"/>
</dbReference>
<dbReference type="CDD" id="cd22510">
    <property type="entry name" value="KH_I_FXR1_rpt3"/>
    <property type="match status" value="1"/>
</dbReference>
<dbReference type="CDD" id="cd20472">
    <property type="entry name" value="Tudor_Agenet_FXR1_rpt1"/>
    <property type="match status" value="1"/>
</dbReference>
<dbReference type="CDD" id="cd20475">
    <property type="entry name" value="Tudor_Agenet_FXR1_rpt2"/>
    <property type="match status" value="1"/>
</dbReference>
<dbReference type="FunFam" id="2.30.30.140:FF:000001">
    <property type="entry name" value="Fragile X mental retardation 1, isoform CRA_e"/>
    <property type="match status" value="1"/>
</dbReference>
<dbReference type="FunFam" id="2.30.30.140:FF:000002">
    <property type="entry name" value="Fragile X mental retardation 1, isoform CRA_e"/>
    <property type="match status" value="1"/>
</dbReference>
<dbReference type="FunFam" id="3.30.1370.10:FF:000004">
    <property type="entry name" value="Fragile X mental retardation 1, isoform CRA_e"/>
    <property type="match status" value="1"/>
</dbReference>
<dbReference type="FunFam" id="3.30.1370.10:FF:000017">
    <property type="entry name" value="Fragile X mental retardation syndrome-related protein 1"/>
    <property type="match status" value="1"/>
</dbReference>
<dbReference type="Gene3D" id="2.30.30.140">
    <property type="match status" value="2"/>
</dbReference>
<dbReference type="Gene3D" id="3.30.1370.10">
    <property type="entry name" value="K Homology domain, type 1"/>
    <property type="match status" value="2"/>
</dbReference>
<dbReference type="InterPro" id="IPR008395">
    <property type="entry name" value="Agenet-like_dom"/>
</dbReference>
<dbReference type="InterPro" id="IPR040148">
    <property type="entry name" value="FMR1"/>
</dbReference>
<dbReference type="InterPro" id="IPR022034">
    <property type="entry name" value="FMR1-like_C_core"/>
</dbReference>
<dbReference type="InterPro" id="IPR040472">
    <property type="entry name" value="FMRP_KH0"/>
</dbReference>
<dbReference type="InterPro" id="IPR032172">
    <property type="entry name" value="FXR1_C1"/>
</dbReference>
<dbReference type="InterPro" id="IPR032177">
    <property type="entry name" value="FXR_C3"/>
</dbReference>
<dbReference type="InterPro" id="IPR004087">
    <property type="entry name" value="KH_dom"/>
</dbReference>
<dbReference type="InterPro" id="IPR004088">
    <property type="entry name" value="KH_dom_type_1"/>
</dbReference>
<dbReference type="InterPro" id="IPR036612">
    <property type="entry name" value="KH_dom_type_1_sf"/>
</dbReference>
<dbReference type="InterPro" id="IPR047494">
    <property type="entry name" value="KH_I_FXR1_rpt1"/>
</dbReference>
<dbReference type="InterPro" id="IPR047495">
    <property type="entry name" value="KH_I_FXR1_rpt2"/>
</dbReference>
<dbReference type="InterPro" id="IPR047496">
    <property type="entry name" value="KH_I_FXR1_rpt3"/>
</dbReference>
<dbReference type="InterPro" id="IPR047425">
    <property type="entry name" value="Tudor_Agenet_FXR1_rpt1"/>
</dbReference>
<dbReference type="InterPro" id="IPR047427">
    <property type="entry name" value="Tudor_Agenet_FXR1_rpt2"/>
</dbReference>
<dbReference type="InterPro" id="IPR041560">
    <property type="entry name" value="Tudor_FRM1"/>
</dbReference>
<dbReference type="PANTHER" id="PTHR10603">
    <property type="entry name" value="FRAGILE X MENTAL RETARDATION SYNDROME-RELATED PROTEIN"/>
    <property type="match status" value="1"/>
</dbReference>
<dbReference type="PANTHER" id="PTHR10603:SF6">
    <property type="entry name" value="RNA-BINDING PROTEIN FXR1"/>
    <property type="match status" value="1"/>
</dbReference>
<dbReference type="Pfam" id="PF05641">
    <property type="entry name" value="Agenet"/>
    <property type="match status" value="1"/>
</dbReference>
<dbReference type="Pfam" id="PF12235">
    <property type="entry name" value="FXMRP1_C_core"/>
    <property type="match status" value="2"/>
</dbReference>
<dbReference type="Pfam" id="PF16096">
    <property type="entry name" value="FXR_C1"/>
    <property type="match status" value="1"/>
</dbReference>
<dbReference type="Pfam" id="PF16097">
    <property type="entry name" value="FXR_C3"/>
    <property type="match status" value="1"/>
</dbReference>
<dbReference type="Pfam" id="PF00013">
    <property type="entry name" value="KH_1"/>
    <property type="match status" value="2"/>
</dbReference>
<dbReference type="Pfam" id="PF17904">
    <property type="entry name" value="KH_9"/>
    <property type="match status" value="1"/>
</dbReference>
<dbReference type="Pfam" id="PF18336">
    <property type="entry name" value="Tudor_FRX1"/>
    <property type="match status" value="1"/>
</dbReference>
<dbReference type="SMART" id="SM00322">
    <property type="entry name" value="KH"/>
    <property type="match status" value="2"/>
</dbReference>
<dbReference type="SUPFAM" id="SSF54791">
    <property type="entry name" value="Eukaryotic type KH-domain (KH-domain type I)"/>
    <property type="match status" value="2"/>
</dbReference>
<dbReference type="PROSITE" id="PS51641">
    <property type="entry name" value="AGENET_LIKE"/>
    <property type="match status" value="2"/>
</dbReference>
<dbReference type="PROSITE" id="PS50084">
    <property type="entry name" value="KH_TYPE_1"/>
    <property type="match status" value="2"/>
</dbReference>
<sequence>MAELTVEVRGSNGAFYKGFIKDVHEDSLTVVFENNWQPERQVPFNEVRLPPPPDIKKEISEGDEVEVYSRANDQEPCGWWLAKVRMMKGEFYVIEYAACDATYNEIVTFERLRPVNQNKTVKKNTFFKCTVDVPEDLREACANENAHKDFKKAVGACRIFYHPETTQLMILSASEATVKRVNILSDMHLRSIRTKLMLMSRNEEATKHLECTKQLAAAFHEEFVVREDLMGLAIGTHGSNIQQARKVPGVTAIELDEDTGTFRIYGESADAVKKARGFLEFVEDFIQVPRNLVGKVIGKNGKVIQEIVDKSGVVRVRIEGDNENKLPREDGMVPFVFVGTKESIGNVQVLLEYHIAYLKEVEQLRMERLQIDEQLRQIGSRSYSGRGRGRRGPNYTSGYGTNSELSNPSETESERKDELSDWSLAGEDDRDSRHQRDSRRRPGGRGRSVSGGRGRGGPRGGKSSISSVLKDPDSNPYSLLDNTESDQTADTDASESHHSTNRRRRSRRRRTDEDAVLMDGMTESDTASVNENGLVTVADYISRAESQSRQRNLPRETLAKNKKEMAKDVIEEHGPSEKAINGPTSASGDDISKLQRTPGEEKINTLKEENTQEAAVLNGVS</sequence>
<feature type="initiator methionine" description="Removed" evidence="29 39">
    <location>
        <position position="1"/>
    </location>
</feature>
<feature type="chain" id="PRO_0000050106" description="RNA-binding protein FXR1">
    <location>
        <begin position="2"/>
        <end position="621"/>
    </location>
</feature>
<feature type="domain" description="Agenet-like 1" evidence="6">
    <location>
        <begin position="4"/>
        <end position="50"/>
    </location>
</feature>
<feature type="domain" description="Agenet-like 2" evidence="6">
    <location>
        <begin position="63"/>
        <end position="115"/>
    </location>
</feature>
<feature type="domain" description="KH 1" evidence="5">
    <location>
        <begin position="222"/>
        <end position="251"/>
    </location>
</feature>
<feature type="domain" description="KH 2" evidence="5">
    <location>
        <begin position="285"/>
        <end position="314"/>
    </location>
</feature>
<feature type="region of interest" description="CC1 domain" evidence="24">
    <location>
        <begin position="201"/>
        <end position="208"/>
    </location>
</feature>
<feature type="region of interest" description="CC2 domain" evidence="24">
    <location>
        <begin position="353"/>
        <end position="379"/>
    </location>
</feature>
<feature type="region of interest" description="Disordered" evidence="7">
    <location>
        <begin position="381"/>
        <end position="530"/>
    </location>
</feature>
<feature type="region of interest" description="RNA-binding RGG-box">
    <location>
        <begin position="442"/>
        <end position="457"/>
    </location>
</feature>
<feature type="region of interest" description="Disordered" evidence="7">
    <location>
        <begin position="545"/>
        <end position="621"/>
    </location>
</feature>
<feature type="compositionally biased region" description="Polar residues" evidence="7">
    <location>
        <begin position="394"/>
        <end position="410"/>
    </location>
</feature>
<feature type="compositionally biased region" description="Gly residues" evidence="7">
    <location>
        <begin position="445"/>
        <end position="460"/>
    </location>
</feature>
<feature type="compositionally biased region" description="Acidic residues" evidence="7">
    <location>
        <begin position="483"/>
        <end position="493"/>
    </location>
</feature>
<feature type="compositionally biased region" description="Basic residues" evidence="7">
    <location>
        <begin position="499"/>
        <end position="509"/>
    </location>
</feature>
<feature type="compositionally biased region" description="Basic and acidic residues" evidence="7">
    <location>
        <begin position="553"/>
        <end position="576"/>
    </location>
</feature>
<feature type="compositionally biased region" description="Basic and acidic residues" evidence="7">
    <location>
        <begin position="590"/>
        <end position="610"/>
    </location>
</feature>
<feature type="modified residue" description="N-acetylalanine" evidence="29 39">
    <location>
        <position position="2"/>
    </location>
</feature>
<feature type="modified residue" description="Phosphotyrosine" evidence="4">
    <location>
        <position position="68"/>
    </location>
</feature>
<feature type="modified residue" description="Phosphothreonine" evidence="40">
    <location>
        <position position="401"/>
    </location>
</feature>
<feature type="modified residue" description="Phosphoserine" evidence="3">
    <location>
        <position position="403"/>
    </location>
</feature>
<feature type="modified residue" description="Phosphoserine" evidence="35 36 38 40">
    <location>
        <position position="406"/>
    </location>
</feature>
<feature type="modified residue" description="Phosphoserine" evidence="35 36 38 40">
    <location>
        <position position="409"/>
    </location>
</feature>
<feature type="modified residue" description="Phosphoserine; by PAK1" evidence="12 37 38 40">
    <location>
        <position position="420"/>
    </location>
</feature>
<feature type="modified residue" description="Phosphoserine" evidence="37 38 40">
    <location>
        <position position="423"/>
    </location>
</feature>
<feature type="modified residue" description="Phosphoserine" evidence="40">
    <location>
        <position position="432"/>
    </location>
</feature>
<feature type="modified residue" description="Asymmetric dimethylarginine; alternate" evidence="1">
    <location>
        <position position="447"/>
    </location>
</feature>
<feature type="modified residue" description="Omega-N-methylarginine; alternate" evidence="1">
    <location>
        <position position="447"/>
    </location>
</feature>
<feature type="modified residue" description="Asymmetric dimethylarginine; alternate" evidence="1">
    <location>
        <position position="453"/>
    </location>
</feature>
<feature type="modified residue" description="Omega-N-methylarginine; alternate" evidence="1">
    <location>
        <position position="453"/>
    </location>
</feature>
<feature type="modified residue" description="Asymmetric dimethylarginine; alternate" evidence="1">
    <location>
        <position position="455"/>
    </location>
</feature>
<feature type="modified residue" description="Omega-N-methylarginine; alternate" evidence="1">
    <location>
        <position position="455"/>
    </location>
</feature>
<feature type="modified residue" description="Phosphothreonine" evidence="4">
    <location>
        <position position="483"/>
    </location>
</feature>
<feature type="modified residue" description="Phosphoserine" evidence="38">
    <location>
        <position position="485"/>
    </location>
</feature>
<feature type="modified residue" description="Phosphoserine" evidence="2">
    <location>
        <position position="524"/>
    </location>
</feature>
<feature type="modified residue" description="Phosphoserine" evidence="36 38 40">
    <location>
        <position position="587"/>
    </location>
</feature>
<feature type="modified residue" description="Phosphothreonine" evidence="38 40">
    <location>
        <position position="611"/>
    </location>
</feature>
<feature type="cross-link" description="Glycyl lysine isopeptide (Lys-Gly) (interchain with G-Cter in SUMO2)" evidence="41">
    <location>
        <position position="56"/>
    </location>
</feature>
<feature type="splice variant" id="VSP_019709" description="In isoform 3." evidence="32">
    <location>
        <begin position="1"/>
        <end position="85"/>
    </location>
</feature>
<feature type="splice variant" id="VSP_019710" description="In isoform 2." evidence="30 31">
    <original>VTVAD</original>
    <variation>GKRCD</variation>
    <location>
        <begin position="535"/>
        <end position="539"/>
    </location>
</feature>
<feature type="splice variant" id="VSP_019711" description="In isoform 2." evidence="30 31">
    <location>
        <begin position="540"/>
        <end position="621"/>
    </location>
</feature>
<feature type="sequence variant" id="VAR_036050" description="In a breast cancer sample; somatic mutation." evidence="9">
    <original>A</original>
    <variation>T</variation>
    <location>
        <position position="233"/>
    </location>
</feature>
<feature type="sequence variant" id="VAR_016077" description="In dbSNP:rs1051080." evidence="26">
    <original>D</original>
    <variation>N</variation>
    <location>
        <position position="429"/>
    </location>
</feature>
<feature type="sequence variant" id="VAR_014890" description="In dbSNP:rs11499.">
    <original>A</original>
    <variation>V</variation>
    <location>
        <position position="614"/>
    </location>
</feature>
<feature type="mutagenesis site" description="Loss of RNA-binding. Disrupts FXR1-network." evidence="24">
    <original>N</original>
    <variation>S</variation>
    <location>
        <position position="202"/>
    </location>
</feature>
<feature type="mutagenesis site" description="Loss of RNA-binding. Disrupts FXR1-network." evidence="24">
    <original>G</original>
    <variation>E</variation>
    <location>
        <position position="266"/>
    </location>
</feature>
<feature type="mutagenesis site" description="Abolished binding to PAK1. Loss of RNA-binding. Disrupts FXR1-network." evidence="12 24">
    <original>I</original>
    <variation>N</variation>
    <location>
        <position position="304"/>
    </location>
</feature>
<feature type="mutagenesis site" description="Does not affect binding to PAK1." evidence="12">
    <original>GN</original>
    <variation>DA</variation>
    <location>
        <begin position="345"/>
        <end position="346"/>
    </location>
</feature>
<feature type="mutagenesis site" description="Abolished binding to PAK1." evidence="12">
    <original>QVLLE</original>
    <variation>KVLLA</variation>
    <location>
        <begin position="348"/>
        <end position="352"/>
    </location>
</feature>
<feature type="mutagenesis site" description="Reduced binding to PAK1." evidence="12">
    <original>EY</original>
    <variation>AA</variation>
    <location>
        <begin position="352"/>
        <end position="353"/>
    </location>
</feature>
<feature type="mutagenesis site" description="Abolished phosphorylation by PAK1, leading to impaired activity." evidence="12">
    <original>S</original>
    <variation>A</variation>
    <location>
        <position position="420"/>
    </location>
</feature>
<feature type="mutagenesis site" description="Mimics phosphorylation state; leading to increased activity." evidence="12">
    <original>S</original>
    <variation>D</variation>
    <location>
        <position position="420"/>
    </location>
</feature>
<feature type="sequence conflict" description="In Ref. 1; AAC50155." evidence="33" ref="1">
    <original>EL</original>
    <variation>DV</variation>
    <location>
        <begin position="3"/>
        <end position="4"/>
    </location>
</feature>
<feature type="sequence conflict" description="In Ref. 3; BAF85322." evidence="33" ref="3">
    <original>S</original>
    <variation>P</variation>
    <location>
        <position position="27"/>
    </location>
</feature>
<feature type="strand" evidence="43">
    <location>
        <begin position="5"/>
        <end position="9"/>
    </location>
</feature>
<feature type="strand" evidence="43">
    <location>
        <begin position="15"/>
        <end position="23"/>
    </location>
</feature>
<feature type="strand" evidence="43">
    <location>
        <begin position="28"/>
        <end position="34"/>
    </location>
</feature>
<feature type="strand" evidence="43">
    <location>
        <begin position="40"/>
        <end position="42"/>
    </location>
</feature>
<feature type="helix" evidence="43">
    <location>
        <begin position="44"/>
        <end position="46"/>
    </location>
</feature>
<feature type="strand" evidence="43">
    <location>
        <begin position="64"/>
        <end position="69"/>
    </location>
</feature>
<feature type="strand" evidence="43">
    <location>
        <begin position="78"/>
        <end position="88"/>
    </location>
</feature>
<feature type="strand" evidence="43">
    <location>
        <begin position="91"/>
        <end position="95"/>
    </location>
</feature>
<feature type="strand" evidence="43">
    <location>
        <begin position="104"/>
        <end position="108"/>
    </location>
</feature>
<feature type="helix" evidence="43">
    <location>
        <begin position="109"/>
        <end position="111"/>
    </location>
</feature>
<feature type="strand" evidence="43">
    <location>
        <begin position="112"/>
        <end position="114"/>
    </location>
</feature>
<feature type="strand" evidence="42">
    <location>
        <begin position="213"/>
        <end position="216"/>
    </location>
</feature>
<feature type="strand" evidence="42">
    <location>
        <begin position="218"/>
        <end position="224"/>
    </location>
</feature>
<feature type="helix" evidence="42">
    <location>
        <begin position="227"/>
        <end position="234"/>
    </location>
</feature>
<feature type="helix" evidence="42">
    <location>
        <begin position="239"/>
        <end position="245"/>
    </location>
</feature>
<feature type="strand" evidence="42">
    <location>
        <begin position="250"/>
        <end position="256"/>
    </location>
</feature>
<feature type="turn" evidence="42">
    <location>
        <begin position="257"/>
        <end position="260"/>
    </location>
</feature>
<feature type="strand" evidence="42">
    <location>
        <begin position="261"/>
        <end position="268"/>
    </location>
</feature>
<feature type="helix" evidence="42">
    <location>
        <begin position="269"/>
        <end position="279"/>
    </location>
</feature>
<feature type="modified residue" description="Phosphoserine" evidence="36">
    <location sequence="P51114-2">
        <position position="524"/>
    </location>
</feature>
<feature type="modified residue" description="Phosphoserine" evidence="36">
    <location sequence="P51114-2">
        <position position="528"/>
    </location>
</feature>
<organism>
    <name type="scientific">Homo sapiens</name>
    <name type="common">Human</name>
    <dbReference type="NCBI Taxonomy" id="9606"/>
    <lineage>
        <taxon>Eukaryota</taxon>
        <taxon>Metazoa</taxon>
        <taxon>Chordata</taxon>
        <taxon>Craniata</taxon>
        <taxon>Vertebrata</taxon>
        <taxon>Euteleostomi</taxon>
        <taxon>Mammalia</taxon>
        <taxon>Eutheria</taxon>
        <taxon>Euarchontoglires</taxon>
        <taxon>Primates</taxon>
        <taxon>Haplorrhini</taxon>
        <taxon>Catarrhini</taxon>
        <taxon>Hominidae</taxon>
        <taxon>Homo</taxon>
    </lineage>
</organism>
<reference key="1">
    <citation type="journal article" date="1995" name="EMBO J.">
        <title>FXR1, an autosomal homolog of the fragile X mental retardation gene.</title>
        <authorList>
            <person name="Siomi M.C."/>
            <person name="Siomi H."/>
            <person name="Sauer W.H."/>
            <person name="Srinivasan S."/>
            <person name="Nussbaum R.L."/>
            <person name="Dreyfuss G."/>
        </authorList>
    </citation>
    <scope>NUCLEOTIDE SEQUENCE [MRNA] (ISOFORMS 1 AND 2)</scope>
    <scope>SUBCELLULAR LOCATION</scope>
    <scope>VARIANT ASN-429</scope>
    <scope>TISSUE SPECIFICITY</scope>
    <source>
        <tissue>Cervix carcinoma</tissue>
    </source>
</reference>
<reference key="2">
    <citation type="submission" date="2003-07" db="EMBL/GenBank/DDBJ databases">
        <title>Identification of alternatively spliced genes related to spermatogenesis using cDNA microarrays.</title>
        <authorList>
            <person name="Xu Z.Y."/>
            <person name="Huang X.Y."/>
            <person name="Wang H."/>
            <person name="Xu M."/>
            <person name="Li J.M."/>
            <person name="Zhou Z.M."/>
            <person name="Sha J.H."/>
        </authorList>
    </citation>
    <scope>NUCLEOTIDE SEQUENCE [MRNA] (ISOFORM 3)</scope>
    <source>
        <tissue>Testis</tissue>
    </source>
</reference>
<reference key="3">
    <citation type="journal article" date="2004" name="Nat. Genet.">
        <title>Complete sequencing and characterization of 21,243 full-length human cDNAs.</title>
        <authorList>
            <person name="Ota T."/>
            <person name="Suzuki Y."/>
            <person name="Nishikawa T."/>
            <person name="Otsuki T."/>
            <person name="Sugiyama T."/>
            <person name="Irie R."/>
            <person name="Wakamatsu A."/>
            <person name="Hayashi K."/>
            <person name="Sato H."/>
            <person name="Nagai K."/>
            <person name="Kimura K."/>
            <person name="Makita H."/>
            <person name="Sekine M."/>
            <person name="Obayashi M."/>
            <person name="Nishi T."/>
            <person name="Shibahara T."/>
            <person name="Tanaka T."/>
            <person name="Ishii S."/>
            <person name="Yamamoto J."/>
            <person name="Saito K."/>
            <person name="Kawai Y."/>
            <person name="Isono Y."/>
            <person name="Nakamura Y."/>
            <person name="Nagahari K."/>
            <person name="Murakami K."/>
            <person name="Yasuda T."/>
            <person name="Iwayanagi T."/>
            <person name="Wagatsuma M."/>
            <person name="Shiratori A."/>
            <person name="Sudo H."/>
            <person name="Hosoiri T."/>
            <person name="Kaku Y."/>
            <person name="Kodaira H."/>
            <person name="Kondo H."/>
            <person name="Sugawara M."/>
            <person name="Takahashi M."/>
            <person name="Kanda K."/>
            <person name="Yokoi T."/>
            <person name="Furuya T."/>
            <person name="Kikkawa E."/>
            <person name="Omura Y."/>
            <person name="Abe K."/>
            <person name="Kamihara K."/>
            <person name="Katsuta N."/>
            <person name="Sato K."/>
            <person name="Tanikawa M."/>
            <person name="Yamazaki M."/>
            <person name="Ninomiya K."/>
            <person name="Ishibashi T."/>
            <person name="Yamashita H."/>
            <person name="Murakawa K."/>
            <person name="Fujimori K."/>
            <person name="Tanai H."/>
            <person name="Kimata M."/>
            <person name="Watanabe M."/>
            <person name="Hiraoka S."/>
            <person name="Chiba Y."/>
            <person name="Ishida S."/>
            <person name="Ono Y."/>
            <person name="Takiguchi S."/>
            <person name="Watanabe S."/>
            <person name="Yosida M."/>
            <person name="Hotuta T."/>
            <person name="Kusano J."/>
            <person name="Kanehori K."/>
            <person name="Takahashi-Fujii A."/>
            <person name="Hara H."/>
            <person name="Tanase T.-O."/>
            <person name="Nomura Y."/>
            <person name="Togiya S."/>
            <person name="Komai F."/>
            <person name="Hara R."/>
            <person name="Takeuchi K."/>
            <person name="Arita M."/>
            <person name="Imose N."/>
            <person name="Musashino K."/>
            <person name="Yuuki H."/>
            <person name="Oshima A."/>
            <person name="Sasaki N."/>
            <person name="Aotsuka S."/>
            <person name="Yoshikawa Y."/>
            <person name="Matsunawa H."/>
            <person name="Ichihara T."/>
            <person name="Shiohata N."/>
            <person name="Sano S."/>
            <person name="Moriya S."/>
            <person name="Momiyama H."/>
            <person name="Satoh N."/>
            <person name="Takami S."/>
            <person name="Terashima Y."/>
            <person name="Suzuki O."/>
            <person name="Nakagawa S."/>
            <person name="Senoh A."/>
            <person name="Mizoguchi H."/>
            <person name="Goto Y."/>
            <person name="Shimizu F."/>
            <person name="Wakebe H."/>
            <person name="Hishigaki H."/>
            <person name="Watanabe T."/>
            <person name="Sugiyama A."/>
            <person name="Takemoto M."/>
            <person name="Kawakami B."/>
            <person name="Yamazaki M."/>
            <person name="Watanabe K."/>
            <person name="Kumagai A."/>
            <person name="Itakura S."/>
            <person name="Fukuzumi Y."/>
            <person name="Fujimori Y."/>
            <person name="Komiyama M."/>
            <person name="Tashiro H."/>
            <person name="Tanigami A."/>
            <person name="Fujiwara T."/>
            <person name="Ono T."/>
            <person name="Yamada K."/>
            <person name="Fujii Y."/>
            <person name="Ozaki K."/>
            <person name="Hirao M."/>
            <person name="Ohmori Y."/>
            <person name="Kawabata A."/>
            <person name="Hikiji T."/>
            <person name="Kobatake N."/>
            <person name="Inagaki H."/>
            <person name="Ikema Y."/>
            <person name="Okamoto S."/>
            <person name="Okitani R."/>
            <person name="Kawakami T."/>
            <person name="Noguchi S."/>
            <person name="Itoh T."/>
            <person name="Shigeta K."/>
            <person name="Senba T."/>
            <person name="Matsumura K."/>
            <person name="Nakajima Y."/>
            <person name="Mizuno T."/>
            <person name="Morinaga M."/>
            <person name="Sasaki M."/>
            <person name="Togashi T."/>
            <person name="Oyama M."/>
            <person name="Hata H."/>
            <person name="Watanabe M."/>
            <person name="Komatsu T."/>
            <person name="Mizushima-Sugano J."/>
            <person name="Satoh T."/>
            <person name="Shirai Y."/>
            <person name="Takahashi Y."/>
            <person name="Nakagawa K."/>
            <person name="Okumura K."/>
            <person name="Nagase T."/>
            <person name="Nomura N."/>
            <person name="Kikuchi H."/>
            <person name="Masuho Y."/>
            <person name="Yamashita R."/>
            <person name="Nakai K."/>
            <person name="Yada T."/>
            <person name="Nakamura Y."/>
            <person name="Ohara O."/>
            <person name="Isogai T."/>
            <person name="Sugano S."/>
        </authorList>
    </citation>
    <scope>NUCLEOTIDE SEQUENCE [LARGE SCALE MRNA] (ISOFORM 1)</scope>
    <source>
        <tissue>Thymus</tissue>
    </source>
</reference>
<reference key="4">
    <citation type="journal article" date="2004" name="Genome Res.">
        <title>The status, quality, and expansion of the NIH full-length cDNA project: the Mammalian Gene Collection (MGC).</title>
        <authorList>
            <consortium name="The MGC Project Team"/>
        </authorList>
    </citation>
    <scope>NUCLEOTIDE SEQUENCE [LARGE SCALE MRNA] (ISOFORM 2)</scope>
    <source>
        <tissue>Cervix</tissue>
    </source>
</reference>
<reference key="5">
    <citation type="submission" date="2008-03" db="UniProtKB">
        <authorList>
            <person name="Bienvenut W.V."/>
            <person name="Calvo F."/>
            <person name="Kolch W."/>
        </authorList>
    </citation>
    <scope>PROTEIN SEQUENCE OF 2-9; 58-70; 246-263 AND 369-376</scope>
    <scope>CLEAVAGE OF INITIATOR METHIONINE</scope>
    <scope>ACETYLATION AT ALA-2</scope>
    <scope>IDENTIFICATION BY MASS SPECTROMETRY</scope>
    <source>
        <tissue>Cervix carcinoma</tissue>
    </source>
</reference>
<reference key="6">
    <citation type="journal article" date="1995" name="EMBO J.">
        <title>The fragile X mental retardation syndrome protein interacts with novel homologs FXR1 and FXR2.</title>
        <authorList>
            <person name="Zhang Y."/>
            <person name="O'Connor J.P."/>
            <person name="Siomi M.C."/>
            <person name="Srinivasan S."/>
            <person name="Dutra A."/>
            <person name="Nussbaum R.L."/>
            <person name="Dreyfuss G."/>
        </authorList>
    </citation>
    <scope>INTERACTION WITH FMR1 AND FXR2</scope>
    <source>
        <tissue>Brain</tissue>
    </source>
</reference>
<reference key="7">
    <citation type="journal article" date="1996" name="Mol. Cell. Biol.">
        <title>Specific sequences in the fragile X syndrome protein FMR1 and the FXR proteins mediate their binding to 60S ribosomal subunits and the interactions among them.</title>
        <authorList>
            <person name="Siomi M.C."/>
            <person name="Zhang Y."/>
            <person name="Siomi H."/>
            <person name="Dreyfuss G."/>
        </authorList>
    </citation>
    <scope>INTERACTION WITH FMR1</scope>
</reference>
<reference key="8">
    <citation type="journal article" date="1997" name="Hum. Mol. Genet.">
        <title>Differential expression of FMR1, FXR1 and FXR2 proteins in human brain and testis.</title>
        <authorList>
            <person name="Tamanini F."/>
            <person name="Willemsen R."/>
            <person name="van Unen L."/>
            <person name="Bontekoe C."/>
            <person name="Galjaard H."/>
            <person name="Oostra B.A."/>
            <person name="Hoogeveen A.T."/>
        </authorList>
    </citation>
    <scope>SUBCELLULAR LOCATION</scope>
    <scope>TISSUE SPECIFICITY</scope>
</reference>
<reference key="9">
    <citation type="journal article" date="2001" name="Hum. Mol. Genet.">
        <title>Evidence that fragile X mental retardation protein is a negative regulator of translation.</title>
        <authorList>
            <person name="Laggerbauer B."/>
            <person name="Ostareck D."/>
            <person name="Keidel E.M."/>
            <person name="Ostareck-Lederer A."/>
            <person name="Fischer U."/>
        </authorList>
    </citation>
    <scope>INTERACTION WITH FMR1</scope>
</reference>
<reference key="10">
    <citation type="journal article" date="2003" name="Hum. Mol. Genet.">
        <title>Fragile X Mental Retardation protein determinants required for its association with polyribosomal mRNPs.</title>
        <authorList>
            <person name="Mazroui R."/>
            <person name="Huot M.E."/>
            <person name="Tremblay S."/>
            <person name="Boilard N."/>
            <person name="Labelle Y."/>
            <person name="Khandjian E.W."/>
        </authorList>
    </citation>
    <scope>INTERACTION WITH FMR1</scope>
</reference>
<reference key="11">
    <citation type="journal article" date="2006" name="Cell">
        <title>Global, in vivo, and site-specific phosphorylation dynamics in signaling networks.</title>
        <authorList>
            <person name="Olsen J.V."/>
            <person name="Blagoev B."/>
            <person name="Gnad F."/>
            <person name="Macek B."/>
            <person name="Kumar C."/>
            <person name="Mortensen P."/>
            <person name="Mann M."/>
        </authorList>
    </citation>
    <scope>IDENTIFICATION BY MASS SPECTROMETRY [LARGE SCALE ANALYSIS]</scope>
    <source>
        <tissue>Cervix carcinoma</tissue>
    </source>
</reference>
<reference key="12">
    <citation type="journal article" date="2007" name="Cell">
        <title>AU-rich-element-mediated upregulation of translation by FXR1 and Argonaute 2.</title>
        <authorList>
            <person name="Vasudevan S."/>
            <person name="Steitz J.A."/>
        </authorList>
    </citation>
    <scope>FUNCTION</scope>
</reference>
<reference key="13">
    <citation type="journal article" date="2008" name="Hum. Mol. Genet.">
        <title>Tdrd3 is a novel stress granule-associated protein interacting with the Fragile-X syndrome protein FMRP.</title>
        <authorList>
            <person name="Linder B."/>
            <person name="Ploettner O."/>
            <person name="Kroiss M."/>
            <person name="Hartmann E."/>
            <person name="Laggerbauer B."/>
            <person name="Meister G."/>
            <person name="Keidel E."/>
            <person name="Fischer U."/>
        </authorList>
    </citation>
    <scope>INTERACTION WITH TDRD3</scope>
</reference>
<reference key="14">
    <citation type="journal article" date="2008" name="Proc. Natl. Acad. Sci. U.S.A.">
        <title>A quantitative atlas of mitotic phosphorylation.</title>
        <authorList>
            <person name="Dephoure N."/>
            <person name="Zhou C."/>
            <person name="Villen J."/>
            <person name="Beausoleil S.A."/>
            <person name="Bakalarski C.E."/>
            <person name="Elledge S.J."/>
            <person name="Gygi S.P."/>
        </authorList>
    </citation>
    <scope>PHOSPHORYLATION [LARGE SCALE ANALYSIS] AT SER-406 AND SER-409</scope>
    <scope>IDENTIFICATION BY MASS SPECTROMETRY [LARGE SCALE ANALYSIS]</scope>
    <source>
        <tissue>Cervix carcinoma</tissue>
    </source>
</reference>
<reference key="15">
    <citation type="journal article" date="2009" name="Anal. Chem.">
        <title>Lys-N and trypsin cover complementary parts of the phosphoproteome in a refined SCX-based approach.</title>
        <authorList>
            <person name="Gauci S."/>
            <person name="Helbig A.O."/>
            <person name="Slijper M."/>
            <person name="Krijgsveld J."/>
            <person name="Heck A.J."/>
            <person name="Mohammed S."/>
        </authorList>
    </citation>
    <scope>IDENTIFICATION BY MASS SPECTROMETRY [LARGE SCALE ANALYSIS]</scope>
</reference>
<reference key="16">
    <citation type="journal article" date="2009" name="Sci. Signal.">
        <title>Quantitative phosphoproteomic analysis of T cell receptor signaling reveals system-wide modulation of protein-protein interactions.</title>
        <authorList>
            <person name="Mayya V."/>
            <person name="Lundgren D.H."/>
            <person name="Hwang S.-I."/>
            <person name="Rezaul K."/>
            <person name="Wu L."/>
            <person name="Eng J.K."/>
            <person name="Rodionov V."/>
            <person name="Han D.K."/>
        </authorList>
    </citation>
    <scope>PHOSPHORYLATION [LARGE SCALE ANALYSIS] AT SER-406; SER-409 AND SER-587</scope>
    <scope>PHOSPHORYLATION [LARGE SCALE ANALYSIS] AT SER-524 AND SER-528 (ISOFORM 2)</scope>
    <scope>IDENTIFICATION BY MASS SPECTROMETRY [LARGE SCALE ANALYSIS]</scope>
    <source>
        <tissue>Leukemic T-cell</tissue>
    </source>
</reference>
<reference key="17">
    <citation type="journal article" date="2010" name="Mol. Cell">
        <title>A functional requirement for PAK1 binding to the KH(2) domain of the fragile X protein-related FXR1.</title>
        <authorList>
            <person name="Say E."/>
            <person name="Tay H.G."/>
            <person name="Zhao Z.S."/>
            <person name="Baskaran Y."/>
            <person name="Li R."/>
            <person name="Lim L."/>
            <person name="Manser E."/>
        </authorList>
    </citation>
    <scope>FUNCTION</scope>
    <scope>SUBCELLULAR LOCATION</scope>
    <scope>PHOSPHORYLATION AT SER-420</scope>
    <scope>MUTAGENESIS OF ILE-304; 345-GLY-ASN-346; 348-GLN--ASN-552; 348-GLN--GLU-352 AND SER-420</scope>
</reference>
<reference key="18">
    <citation type="journal article" date="2010" name="Sci. Signal.">
        <title>Quantitative phosphoproteomics reveals widespread full phosphorylation site occupancy during mitosis.</title>
        <authorList>
            <person name="Olsen J.V."/>
            <person name="Vermeulen M."/>
            <person name="Santamaria A."/>
            <person name="Kumar C."/>
            <person name="Miller M.L."/>
            <person name="Jensen L.J."/>
            <person name="Gnad F."/>
            <person name="Cox J."/>
            <person name="Jensen T.S."/>
            <person name="Nigg E.A."/>
            <person name="Brunak S."/>
            <person name="Mann M."/>
        </authorList>
    </citation>
    <scope>PHOSPHORYLATION [LARGE SCALE ANALYSIS] AT SER-420 AND SER-423</scope>
    <scope>IDENTIFICATION BY MASS SPECTROMETRY [LARGE SCALE ANALYSIS]</scope>
    <source>
        <tissue>Cervix carcinoma</tissue>
    </source>
</reference>
<reference key="19">
    <citation type="journal article" date="2011" name="BMC Syst. Biol.">
        <title>Initial characterization of the human central proteome.</title>
        <authorList>
            <person name="Burkard T.R."/>
            <person name="Planyavsky M."/>
            <person name="Kaupe I."/>
            <person name="Breitwieser F.P."/>
            <person name="Buerckstuemmer T."/>
            <person name="Bennett K.L."/>
            <person name="Superti-Furga G."/>
            <person name="Colinge J."/>
        </authorList>
    </citation>
    <scope>IDENTIFICATION BY MASS SPECTROMETRY [LARGE SCALE ANALYSIS]</scope>
</reference>
<reference key="20">
    <citation type="journal article" date="2011" name="FEBS Lett.">
        <title>Evidence for the association of the human regulatory protein Ki-1/57 with the translational machinery.</title>
        <authorList>
            <person name="Goncalves K.A."/>
            <person name="Bressan G.C."/>
            <person name="Saito A."/>
            <person name="Morello L.G."/>
            <person name="Zanchin N.I."/>
            <person name="Kobarg J."/>
        </authorList>
    </citation>
    <scope>INTERACTION WITH HABP4</scope>
</reference>
<reference key="21">
    <citation type="journal article" date="2011" name="Sci. Signal.">
        <title>System-wide temporal characterization of the proteome and phosphoproteome of human embryonic stem cell differentiation.</title>
        <authorList>
            <person name="Rigbolt K.T."/>
            <person name="Prokhorova T.A."/>
            <person name="Akimov V."/>
            <person name="Henningsen J."/>
            <person name="Johansen P.T."/>
            <person name="Kratchmarova I."/>
            <person name="Kassem M."/>
            <person name="Mann M."/>
            <person name="Olsen J.V."/>
            <person name="Blagoev B."/>
        </authorList>
    </citation>
    <scope>PHOSPHORYLATION [LARGE SCALE ANALYSIS] AT SER-406; SER-409; SER-420; SER-423; SER-485; SER-587 AND THR-611</scope>
    <scope>IDENTIFICATION BY MASS SPECTROMETRY [LARGE SCALE ANALYSIS]</scope>
</reference>
<reference key="22">
    <citation type="journal article" date="2012" name="Proc. Natl. Acad. Sci. U.S.A.">
        <title>N-terminal acetylome analyses and functional insights of the N-terminal acetyltransferase NatB.</title>
        <authorList>
            <person name="Van Damme P."/>
            <person name="Lasa M."/>
            <person name="Polevoda B."/>
            <person name="Gazquez C."/>
            <person name="Elosegui-Artola A."/>
            <person name="Kim D.S."/>
            <person name="De Juan-Pardo E."/>
            <person name="Demeyer K."/>
            <person name="Hole K."/>
            <person name="Larrea E."/>
            <person name="Timmerman E."/>
            <person name="Prieto J."/>
            <person name="Arnesen T."/>
            <person name="Sherman F."/>
            <person name="Gevaert K."/>
            <person name="Aldabe R."/>
        </authorList>
    </citation>
    <scope>ACETYLATION [LARGE SCALE ANALYSIS] AT ALA-2</scope>
    <scope>CLEAVAGE OF INITIATOR METHIONINE [LARGE SCALE ANALYSIS]</scope>
    <scope>IDENTIFICATION BY MASS SPECTROMETRY [LARGE SCALE ANALYSIS]</scope>
</reference>
<reference key="23">
    <citation type="journal article" date="2013" name="J. Proteome Res.">
        <title>Toward a comprehensive characterization of a human cancer cell phosphoproteome.</title>
        <authorList>
            <person name="Zhou H."/>
            <person name="Di Palma S."/>
            <person name="Preisinger C."/>
            <person name="Peng M."/>
            <person name="Polat A.N."/>
            <person name="Heck A.J."/>
            <person name="Mohammed S."/>
        </authorList>
    </citation>
    <scope>PHOSPHORYLATION [LARGE SCALE ANALYSIS] AT THR-401; SER-406; SER-409; SER-420; SER-423; SER-432; SER-587 AND THR-611</scope>
    <scope>IDENTIFICATION BY MASS SPECTROMETRY [LARGE SCALE ANALYSIS]</scope>
    <source>
        <tissue>Cervix carcinoma</tissue>
        <tissue>Erythroleukemia</tissue>
    </source>
</reference>
<reference key="24">
    <citation type="journal article" date="2014" name="J. Proteomics">
        <title>An enzyme assisted RP-RPLC approach for in-depth analysis of human liver phosphoproteome.</title>
        <authorList>
            <person name="Bian Y."/>
            <person name="Song C."/>
            <person name="Cheng K."/>
            <person name="Dong M."/>
            <person name="Wang F."/>
            <person name="Huang J."/>
            <person name="Sun D."/>
            <person name="Wang L."/>
            <person name="Ye M."/>
            <person name="Zou H."/>
        </authorList>
    </citation>
    <scope>IDENTIFICATION BY MASS SPECTROMETRY [LARGE SCALE ANALYSIS]</scope>
    <source>
        <tissue>Liver</tissue>
    </source>
</reference>
<reference key="25">
    <citation type="journal article" date="2014" name="Mol. Cell. Biol.">
        <title>Plakophilins 1 and 3 bind to FXR1 and thereby influence the mRNA stability of desmosomal proteins.</title>
        <authorList>
            <person name="Fischer-Keso R."/>
            <person name="Breuninger S."/>
            <person name="Hofmann S."/>
            <person name="Henn M."/>
            <person name="Roehrig T."/>
            <person name="Stroebel P."/>
            <person name="Stoecklin G."/>
            <person name="Hofmann I."/>
        </authorList>
    </citation>
    <scope>FUNCTION</scope>
    <scope>INTERACTION WITH PKP1 AND PKP3</scope>
</reference>
<reference key="26">
    <citation type="journal article" date="2016" name="PLoS Pathog.">
        <title>New World and Old World Alphaviruses Have Evolved to Exploit Different Components of Stress Granules, FXR and G3BP Proteins, for Assembly of Viral Replication Complexes.</title>
        <authorList>
            <person name="Kim D.Y."/>
            <person name="Reynaud J.M."/>
            <person name="Rasalouskaya A."/>
            <person name="Akhrymuk I."/>
            <person name="Mobley J.A."/>
            <person name="Frolov I."/>
            <person name="Frolova E.I."/>
        </authorList>
    </citation>
    <scope>INTERACTION WITH VENEZUELAN EQUINE ENCEPHALITIS VIRUS NON-STRUCTURAL PROTEIN 3 (MICROBIAL INFECTION)</scope>
</reference>
<reference key="27">
    <citation type="journal article" date="2017" name="Nat. Commun.">
        <title>Fbxo4-mediated degradation of Fxr1 suppresses tumorigenesis in head and neck squamous cell carcinoma.</title>
        <authorList>
            <person name="Qie S."/>
            <person name="Majumder M."/>
            <person name="Mackiewicz K."/>
            <person name="Howley B.V."/>
            <person name="Peterson Y.K."/>
            <person name="Howe P.H."/>
            <person name="Palanisamy V."/>
            <person name="Diehl J.A."/>
        </authorList>
    </citation>
    <scope>UBIQUITINATION</scope>
</reference>
<reference key="28">
    <citation type="journal article" date="2017" name="Nat. Struct. Mol. Biol.">
        <title>Site-specific mapping of the human SUMO proteome reveals co-modification with phosphorylation.</title>
        <authorList>
            <person name="Hendriks I.A."/>
            <person name="Lyon D."/>
            <person name="Young C."/>
            <person name="Jensen L.J."/>
            <person name="Vertegaal A.C."/>
            <person name="Nielsen M.L."/>
        </authorList>
    </citation>
    <scope>SUMOYLATION [LARGE SCALE ANALYSIS] AT LYS-56</scope>
    <scope>IDENTIFICATION BY MASS SPECTROMETRY [LARGE SCALE ANALYSIS]</scope>
</reference>
<reference key="29">
    <citation type="journal article" date="2018" name="Cell Rep.">
        <title>FXR1 is an IL-19-responsive RNA-binding protein that destabilizes pro-inflammatory transcripts in vascular smooth muscle cells.</title>
        <authorList>
            <person name="Herman A.B."/>
            <person name="Vrakas C.N."/>
            <person name="Ray M."/>
            <person name="Kelemen S.E."/>
            <person name="Sweredoski M.J."/>
            <person name="Moradian A."/>
            <person name="Haines D.S."/>
            <person name="Autieri M.V."/>
        </authorList>
    </citation>
    <scope>FUNCTION</scope>
    <scope>INTERACTION WITH ELAVL1</scope>
    <scope>INDUCTION</scope>
</reference>
<reference key="30">
    <citation type="journal article" date="2019" name="Nat. Commun.">
        <title>Recessive mutations in muscle-specific isoforms of FXR1 cause congenital multi-minicore myopathy.</title>
        <authorList>
            <person name="Estan M.C."/>
            <person name="Fernandez-Nunez E."/>
            <person name="Zaki M.S."/>
            <person name="Esteban M.I."/>
            <person name="Donkervoort S."/>
            <person name="Hawkins C."/>
            <person name="Caparros-Martin J.A."/>
            <person name="Saade D."/>
            <person name="Hu Y."/>
            <person name="Bolduc V."/>
            <person name="Chao K.R."/>
            <person name="Nevado J."/>
            <person name="Lamuedra A."/>
            <person name="Largo R."/>
            <person name="Herrero-Beaumont G."/>
            <person name="Regadera J."/>
            <person name="Hernandez-Chico C."/>
            <person name="Tizzano E.F."/>
            <person name="Martinez-Glez V."/>
            <person name="Carvajal J.J."/>
            <person name="Zong R."/>
            <person name="Nelson D.L."/>
            <person name="Otaify G.A."/>
            <person name="Temtamy S."/>
            <person name="Aglan M."/>
            <person name="Issa M."/>
            <person name="Boennemann C.G."/>
            <person name="Lapunzina P."/>
            <person name="Yoon G."/>
            <person name="Ruiz-Perez V.L."/>
        </authorList>
    </citation>
    <scope>INVOLVEMENT IN CMYP9A</scope>
    <scope>INVOLVEMENT IN CMYP9B</scope>
    <scope>FUNCTION</scope>
    <scope>SUBCELLULAR LOCATION</scope>
</reference>
<reference key="31">
    <citation type="journal article" date="2020" name="EMBO J.">
        <title>Spatial control of nucleoporin condensation by fragile X-related proteins.</title>
        <authorList>
            <person name="Agote-Aran A."/>
            <person name="Schmucker S."/>
            <person name="Jerabkova K."/>
            <person name="Jmel Boyer I."/>
            <person name="Berto A."/>
            <person name="Pacini L."/>
            <person name="Ronchi P."/>
            <person name="Kleiss C."/>
            <person name="Guerard L."/>
            <person name="Schwab Y."/>
            <person name="Moine H."/>
            <person name="Mandel J.L."/>
            <person name="Jacquemont S."/>
            <person name="Bagni C."/>
            <person name="Sumara I."/>
        </authorList>
    </citation>
    <scope>FUNCTION</scope>
    <scope>SUBCELLULAR LOCATION</scope>
</reference>
<reference key="32">
    <citation type="journal article" date="2021" name="Cell Rep.">
        <title>RNA-binding protein FXR1 drives cMYC translation by recruiting eIF4F complex to the translation start site.</title>
        <authorList>
            <person name="George J."/>
            <person name="Li Y."/>
            <person name="Kadamberi I.P."/>
            <person name="Parashar D."/>
            <person name="Tsaih S.W."/>
            <person name="Gupta P."/>
            <person name="Geethadevi A."/>
            <person name="Chen C."/>
            <person name="Ghosh C."/>
            <person name="Sun Y."/>
            <person name="Mittal S."/>
            <person name="Ramchandran R."/>
            <person name="Rui H."/>
            <person name="Lopez-Berestein G."/>
            <person name="Rodriguez-Aguayo C."/>
            <person name="Leone G."/>
            <person name="Rader J.S."/>
            <person name="Sood A.K."/>
            <person name="Dey M."/>
            <person name="Pradeep S."/>
            <person name="Chaluvally-Raghavan P."/>
        </authorList>
    </citation>
    <scope>FUNCTION</scope>
</reference>
<reference key="33">
    <citation type="journal article" date="2022" name="Oncogene">
        <title>CEP63 upregulates YAP1 to promote colorectal cancer progression through stabilizing RNA binding protein FXR1.</title>
        <authorList>
            <person name="Ling H."/>
            <person name="Cao C.H."/>
            <person name="Han K."/>
            <person name="Lv Y.R."/>
            <person name="Ma X.D."/>
            <person name="Cao J.H."/>
            <person name="Chen J.W."/>
            <person name="Li S."/>
            <person name="Lin J.L."/>
            <person name="Fang Y.J."/>
            <person name="Pan Z.Z."/>
            <person name="Xie D."/>
            <person name="Wang F.W."/>
        </authorList>
    </citation>
    <scope>FUNCTION</scope>
    <scope>UBIQUITINATION</scope>
    <scope>INTERACTION WITH CEP63</scope>
</reference>
<reference key="34">
    <citation type="journal article" date="2022" name="Sci. Adv.">
        <title>Ribosome changes reprogram translation for chemosurvival in G0 leukemic cells.</title>
        <authorList>
            <person name="Datta C."/>
            <person name="Truesdell S.S."/>
            <person name="Wu K.Q."/>
            <person name="Bukhari S.I.A."/>
            <person name="Ngue H."/>
            <person name="Buchanan B."/>
            <person name="Le Tonqueze O."/>
            <person name="Lee S."/>
            <person name="Kollu S."/>
            <person name="Granovetter M.A."/>
            <person name="Boukhali M."/>
            <person name="Kreuzer J."/>
            <person name="Batool M.S."/>
            <person name="Balaj L."/>
            <person name="Haas W."/>
            <person name="Vasudevan S."/>
        </authorList>
    </citation>
    <scope>FUNCTION</scope>
</reference>
<reference key="35">
    <citation type="journal article" date="2024" name="Cell">
        <title>The FXR1 network acts as a signaling scaffold for actomyosin remodeling.</title>
        <authorList>
            <person name="Chen X."/>
            <person name="Fansler M.M."/>
            <person name="Janjos U."/>
            <person name="Ule J."/>
            <person name="Mayr C."/>
        </authorList>
    </citation>
    <scope>FUNCTION</scope>
    <scope>SUBUNIT</scope>
    <scope>MUTAGENESIS OF ASN-202; GLY-266 AND ILE-304</scope>
    <scope>SUBCELLULAR LOCATION</scope>
</reference>
<reference key="36">
    <citation type="submission" date="2005-11" db="PDB data bank">
        <title>Solution structure of the N-terminal KH domain of human FXR1.</title>
        <authorList>
            <consortium name="RIKEN structural genomics initiative (RSGI)"/>
        </authorList>
    </citation>
    <scope>STRUCTURE BY NMR OF 212-289</scope>
</reference>
<reference key="37">
    <citation type="journal article" date="2010" name="PLoS ONE">
        <title>Structural studies of the tandem Tudor domains of fragile X mental retardation related proteins FXR1 and FXR2.</title>
        <authorList>
            <person name="Adams-Cioaba M.A."/>
            <person name="Guo Y."/>
            <person name="Bian C."/>
            <person name="Amaya M.F."/>
            <person name="Lam R."/>
            <person name="Wasney G.A."/>
            <person name="Vedadi M."/>
            <person name="Xu C."/>
            <person name="Min J."/>
        </authorList>
    </citation>
    <scope>X-RAY CRYSTALLOGRAPHY (2.5 ANGSTROMS) OF 2-132</scope>
    <scope>DOMAINS TUDOR</scope>
</reference>
<reference key="38">
    <citation type="journal article" date="2006" name="Science">
        <title>The consensus coding sequences of human breast and colorectal cancers.</title>
        <authorList>
            <person name="Sjoeblom T."/>
            <person name="Jones S."/>
            <person name="Wood L.D."/>
            <person name="Parsons D.W."/>
            <person name="Lin J."/>
            <person name="Barber T.D."/>
            <person name="Mandelker D."/>
            <person name="Leary R.J."/>
            <person name="Ptak J."/>
            <person name="Silliman N."/>
            <person name="Szabo S."/>
            <person name="Buckhaults P."/>
            <person name="Farrell C."/>
            <person name="Meeh P."/>
            <person name="Markowitz S.D."/>
            <person name="Willis J."/>
            <person name="Dawson D."/>
            <person name="Willson J.K.V."/>
            <person name="Gazdar A.F."/>
            <person name="Hartigan J."/>
            <person name="Wu L."/>
            <person name="Liu C."/>
            <person name="Parmigiani G."/>
            <person name="Park B.H."/>
            <person name="Bachman K.E."/>
            <person name="Papadopoulos N."/>
            <person name="Vogelstein B."/>
            <person name="Kinzler K.W."/>
            <person name="Velculescu V.E."/>
        </authorList>
    </citation>
    <scope>VARIANT [LARGE SCALE ANALYSIS] THR-233</scope>
</reference>